<evidence type="ECO:0000269" key="1">
    <source>
    </source>
</evidence>
<evidence type="ECO:0000305" key="2"/>
<evidence type="ECO:0007829" key="3">
    <source>
        <dbReference type="PDB" id="1I94"/>
    </source>
</evidence>
<evidence type="ECO:0007829" key="4">
    <source>
        <dbReference type="PDB" id="1J5E"/>
    </source>
</evidence>
<evidence type="ECO:0007829" key="5">
    <source>
        <dbReference type="PDB" id="1N32"/>
    </source>
</evidence>
<evidence type="ECO:0007829" key="6">
    <source>
        <dbReference type="PDB" id="1XMQ"/>
    </source>
</evidence>
<evidence type="ECO:0007829" key="7">
    <source>
        <dbReference type="PDB" id="1XNQ"/>
    </source>
</evidence>
<evidence type="ECO:0007829" key="8">
    <source>
        <dbReference type="PDB" id="2UU9"/>
    </source>
</evidence>
<evidence type="ECO:0007829" key="9">
    <source>
        <dbReference type="PDB" id="2UUB"/>
    </source>
</evidence>
<evidence type="ECO:0007829" key="10">
    <source>
        <dbReference type="PDB" id="2VQE"/>
    </source>
</evidence>
<evidence type="ECO:0007829" key="11">
    <source>
        <dbReference type="PDB" id="2VQF"/>
    </source>
</evidence>
<evidence type="ECO:0007829" key="12">
    <source>
        <dbReference type="PDB" id="3T1Y"/>
    </source>
</evidence>
<evidence type="ECO:0007829" key="13">
    <source>
        <dbReference type="PDB" id="4LFB"/>
    </source>
</evidence>
<keyword id="KW-0002">3D-structure</keyword>
<keyword id="KW-0175">Coiled coil</keyword>
<keyword id="KW-0903">Direct protein sequencing</keyword>
<keyword id="KW-1185">Reference proteome</keyword>
<keyword id="KW-0687">Ribonucleoprotein</keyword>
<keyword id="KW-0689">Ribosomal protein</keyword>
<keyword id="KW-0694">RNA-binding</keyword>
<keyword id="KW-0699">rRNA-binding</keyword>
<feature type="initiator methionine" description="Removed" evidence="1">
    <location>
        <position position="1"/>
    </location>
</feature>
<feature type="chain" id="PRO_0000134264" description="Small ribosomal subunit protein uS2">
    <location>
        <begin position="2"/>
        <end position="256"/>
    </location>
</feature>
<feature type="coiled-coil region">
    <location>
        <begin position="104"/>
        <end position="149"/>
    </location>
</feature>
<feature type="sequence conflict" description="In Ref. 2; AA sequence." evidence="2" ref="2">
    <original>H</original>
    <variation>N</variation>
    <location>
        <position position="19"/>
    </location>
</feature>
<feature type="turn" evidence="3">
    <location>
        <begin position="4"/>
        <end position="6"/>
    </location>
</feature>
<feature type="helix" evidence="13">
    <location>
        <begin position="9"/>
        <end position="11"/>
    </location>
</feature>
<feature type="helix" evidence="4">
    <location>
        <begin position="12"/>
        <end position="14"/>
    </location>
</feature>
<feature type="strand" evidence="11">
    <location>
        <begin position="15"/>
        <end position="18"/>
    </location>
</feature>
<feature type="strand" evidence="10">
    <location>
        <begin position="20"/>
        <end position="23"/>
    </location>
</feature>
<feature type="helix" evidence="10">
    <location>
        <begin position="26"/>
        <end position="28"/>
    </location>
</feature>
<feature type="helix" evidence="7">
    <location>
        <begin position="29"/>
        <end position="31"/>
    </location>
</feature>
<feature type="strand" evidence="10">
    <location>
        <begin position="32"/>
        <end position="36"/>
    </location>
</feature>
<feature type="strand" evidence="10">
    <location>
        <begin position="39"/>
        <end position="42"/>
    </location>
</feature>
<feature type="helix" evidence="10">
    <location>
        <begin position="44"/>
        <end position="62"/>
    </location>
</feature>
<feature type="turn" evidence="10">
    <location>
        <begin position="63"/>
        <end position="65"/>
    </location>
</feature>
<feature type="strand" evidence="10">
    <location>
        <begin position="68"/>
        <end position="71"/>
    </location>
</feature>
<feature type="strand" evidence="10">
    <location>
        <begin position="74"/>
        <end position="77"/>
    </location>
</feature>
<feature type="turn" evidence="10">
    <location>
        <begin position="78"/>
        <end position="86"/>
    </location>
</feature>
<feature type="strand" evidence="10">
    <location>
        <begin position="87"/>
        <end position="89"/>
    </location>
</feature>
<feature type="turn" evidence="10">
    <location>
        <begin position="99"/>
        <end position="104"/>
    </location>
</feature>
<feature type="helix" evidence="10">
    <location>
        <begin position="105"/>
        <end position="121"/>
    </location>
</feature>
<feature type="strand" evidence="6">
    <location>
        <begin position="122"/>
        <end position="124"/>
    </location>
</feature>
<feature type="helix" evidence="9">
    <location>
        <begin position="127"/>
        <end position="129"/>
    </location>
</feature>
<feature type="helix" evidence="10">
    <location>
        <begin position="132"/>
        <end position="135"/>
    </location>
</feature>
<feature type="helix" evidence="10">
    <location>
        <begin position="138"/>
        <end position="148"/>
    </location>
</feature>
<feature type="strand" evidence="5">
    <location>
        <begin position="149"/>
        <end position="151"/>
    </location>
</feature>
<feature type="helix" evidence="10">
    <location>
        <begin position="152"/>
        <end position="154"/>
    </location>
</feature>
<feature type="strand" evidence="8">
    <location>
        <begin position="156"/>
        <end position="158"/>
    </location>
</feature>
<feature type="strand" evidence="10">
    <location>
        <begin position="160"/>
        <end position="165"/>
    </location>
</feature>
<feature type="turn" evidence="10">
    <location>
        <begin position="167"/>
        <end position="170"/>
    </location>
</feature>
<feature type="helix" evidence="10">
    <location>
        <begin position="171"/>
        <end position="179"/>
    </location>
</feature>
<feature type="strand" evidence="9">
    <location>
        <begin position="184"/>
        <end position="188"/>
    </location>
</feature>
<feature type="strand" evidence="12">
    <location>
        <begin position="190"/>
        <end position="192"/>
    </location>
</feature>
<feature type="helix" evidence="10">
    <location>
        <begin position="194"/>
        <end position="196"/>
    </location>
</feature>
<feature type="strand" evidence="10">
    <location>
        <begin position="198"/>
        <end position="200"/>
    </location>
</feature>
<feature type="strand" evidence="6">
    <location>
        <begin position="205"/>
        <end position="207"/>
    </location>
</feature>
<feature type="helix" evidence="10">
    <location>
        <begin position="208"/>
        <end position="223"/>
    </location>
</feature>
<feature type="turn" evidence="10">
    <location>
        <begin position="224"/>
        <end position="226"/>
    </location>
</feature>
<feature type="turn" evidence="10">
    <location>
        <begin position="234"/>
        <end position="239"/>
    </location>
</feature>
<name>RS2_THET8</name>
<comment type="function">
    <text>Spans the head-body hinge region of the 30S subunit. Is loosely associated with the 30S subunit.</text>
</comment>
<comment type="subunit">
    <text>Part of the 30S ribosomal subunit. Contacts protein S8 and may contact the N-terminus of Era.</text>
</comment>
<comment type="similarity">
    <text evidence="2">Belongs to the universal ribosomal protein uS2 family.</text>
</comment>
<accession>P80371</accession>
<accession>Q5SJZ1</accession>
<accession>Q9ACK1</accession>
<organism>
    <name type="scientific">Thermus thermophilus (strain ATCC 27634 / DSM 579 / HB8)</name>
    <dbReference type="NCBI Taxonomy" id="300852"/>
    <lineage>
        <taxon>Bacteria</taxon>
        <taxon>Thermotogati</taxon>
        <taxon>Deinococcota</taxon>
        <taxon>Deinococci</taxon>
        <taxon>Thermales</taxon>
        <taxon>Thermaceae</taxon>
        <taxon>Thermus</taxon>
    </lineage>
</organism>
<proteinExistence type="evidence at protein level"/>
<sequence length="256" mass="29277">MPVEITVKELLEAGVHFGHERKRWNPKFARYIYAERNGIHIIDLQKTMEELERTFRFIEDLAMRGGTILFVGTKKQAQDIVRMEAERAGMPYVNQRWLGGMLTNFKTISQRVHRLEELEALFASPEIEERPKKEQVRLKHELERLQKYLSGFRLLKRLPDAIFVVDPTKEAIAVREARKLFIPVIALADTDSDPDLVDYIIPGNDDAIRSIQLILSRAVDLIIQARGGVVEPSPSYALVQEAEATETPEGESEVEA</sequence>
<protein>
    <recommendedName>
        <fullName evidence="2">Small ribosomal subunit protein uS2</fullName>
    </recommendedName>
    <alternativeName>
        <fullName>30S ribosomal protein S2</fullName>
    </alternativeName>
</protein>
<reference key="1">
    <citation type="submission" date="2004-11" db="EMBL/GenBank/DDBJ databases">
        <title>Complete genome sequence of Thermus thermophilus HB8.</title>
        <authorList>
            <person name="Masui R."/>
            <person name="Kurokawa K."/>
            <person name="Nakagawa N."/>
            <person name="Tokunaga F."/>
            <person name="Koyama Y."/>
            <person name="Shibata T."/>
            <person name="Oshima T."/>
            <person name="Yokoyama S."/>
            <person name="Yasunaga T."/>
            <person name="Kuramitsu S."/>
        </authorList>
    </citation>
    <scope>NUCLEOTIDE SEQUENCE [LARGE SCALE GENOMIC DNA]</scope>
    <source>
        <strain>ATCC 27634 / DSM 579 / HB8</strain>
    </source>
</reference>
<reference key="2">
    <citation type="journal article" date="1994" name="Eur. J. Biochem.">
        <title>Purification and characterization of the 30S ribosomal proteins from the bacterium Thermus thermophilus.</title>
        <authorList>
            <person name="Tsiboli P."/>
            <person name="Herfurth E."/>
            <person name="Choli T."/>
        </authorList>
    </citation>
    <scope>PROTEIN SEQUENCE OF 2-26</scope>
</reference>
<reference key="3">
    <citation type="journal article" date="1996" name="Eur. J. Biochem.">
        <title>Elongation factor Ts from Thermus thermophilus -- overproduction in Escherichia coli, quaternary structure and interaction with elongation factor Tu.</title>
        <authorList>
            <person name="Blank J."/>
            <person name="Nock S."/>
            <person name="Kreutzer R."/>
            <person name="Sprinzl M."/>
        </authorList>
    </citation>
    <scope>NUCLEOTIDE SEQUENCE [GENOMIC DNA] OF 168-256</scope>
</reference>
<reference key="4">
    <citation type="journal article" date="2000" name="Nature">
        <title>Structure of the 30S ribosomal subunit.</title>
        <authorList>
            <person name="Wimberly B.T."/>
            <person name="Brodersen D.E."/>
            <person name="Clemons W.M. Jr."/>
            <person name="Morgan-Warren R.J."/>
            <person name="Carter A.P."/>
            <person name="Vonrhein C."/>
            <person name="Hartsch T."/>
            <person name="Ramakrishnan V."/>
        </authorList>
    </citation>
    <scope>X-RAY CRYSTALLOGRAPHY (3.05 ANGSTROMS) OF THE 30S SUBUNIT</scope>
</reference>
<reference key="5">
    <citation type="journal article" date="2000" name="Cell">
        <title>Structure of functionally activated small ribosomal subunit at 3.3 A resolution.</title>
        <authorList>
            <person name="Schluenzen F."/>
            <person name="Tocilj A."/>
            <person name="Zarivach R."/>
            <person name="Harms J."/>
            <person name="Gluehmann M."/>
            <person name="Janell D."/>
            <person name="Bashan A."/>
            <person name="Bartels H."/>
            <person name="Agmon I."/>
            <person name="Franceschi F."/>
            <person name="Yonath A."/>
        </authorList>
    </citation>
    <scope>X-RAY CRYSTALLOGRAPHY (3.3 ANGSTROMS) OF THE 30S SUBUNIT</scope>
</reference>
<reference key="6">
    <citation type="journal article" date="2000" name="Cell">
        <title>The structural basis for the action of the antibiotics tetracycline, pactamycin, and hygromycin B on the 30S ribosomal subunit.</title>
        <authorList>
            <person name="Brodersen D.E."/>
            <person name="Clemons W.M. Jr."/>
            <person name="Carter A.P."/>
            <person name="Morgan-Warren R.J."/>
            <person name="Wimberly B.T."/>
            <person name="Ramakrishnan V."/>
        </authorList>
    </citation>
    <scope>X-RAY CRYSTALLOGRAPHY (3.3 ANGSTROMS) OF THE 30S SUBUNIT</scope>
</reference>
<reference key="7">
    <citation type="journal article" date="2000" name="Nature">
        <title>Functional insights from the structure of the 30S ribosomal subunit and its interactions with antibiotics.</title>
        <authorList>
            <person name="Carter A.P."/>
            <person name="Clemons W.M. Jr."/>
            <person name="Brodersen D.E."/>
            <person name="Morgan-Warren R.J."/>
            <person name="Wimberly B.T."/>
            <person name="Ramakrishnan V."/>
        </authorList>
    </citation>
    <scope>X-RAY CRYSTALLOGRAPHY (3.0 ANGSTROMS) OF THE 30S SUBUNIT</scope>
</reference>
<reference key="8">
    <citation type="journal article" date="2001" name="Cell">
        <title>The path of messenger RNA through the ribosome.</title>
        <authorList>
            <person name="Yusupova G.Z."/>
            <person name="Yusupov M.M."/>
            <person name="Cate J.H.D."/>
            <person name="Noller H.F."/>
        </authorList>
    </citation>
    <scope>X-RAY CRYSTALLOGRAPHY (5.0 ANGSTROMS) OF THE RIBOSOME</scope>
</reference>
<reference key="9">
    <citation type="journal article" date="2001" name="EMBO J.">
        <title>Crystal structures of complexes of the small ribosomal subunit with tetracycline, edeine and IF3.</title>
        <authorList>
            <person name="Pioletti M."/>
            <person name="Schluenzen F."/>
            <person name="Harms J."/>
            <person name="Zarivach R."/>
            <person name="Gluehmann M."/>
            <person name="Avila H."/>
            <person name="Bashan A."/>
            <person name="Bartels H."/>
            <person name="Auerbach T."/>
            <person name="Jacobi C."/>
            <person name="Hartsch T."/>
            <person name="Yonath A."/>
            <person name="Franceschi F."/>
        </authorList>
    </citation>
    <scope>X-RAY CRYSTALLOGRAPHY (3.2 ANGSTROMS) OF THE 30S SUBUNIT</scope>
</reference>
<reference key="10">
    <citation type="journal article" date="2001" name="Science">
        <title>Crystal structure of an initiation factor bound to the 30S ribosomal subunit.</title>
        <authorList>
            <person name="Carter A.P."/>
            <person name="Clemons W.M. Jr."/>
            <person name="Brodersen D.E."/>
            <person name="Morgan-Warren R.J."/>
            <person name="Hartsch T."/>
            <person name="Wimberly B.T."/>
            <person name="Ramakrishnan V."/>
        </authorList>
    </citation>
    <scope>X-RAY CRYSTALLOGRAPHY (3.2 ANGSTROMS) OF THE 30S SUBUNIT</scope>
</reference>
<reference key="11">
    <citation type="journal article" date="2001" name="Science">
        <title>Crystal structure of the ribosome at 5.5 A resolution.</title>
        <authorList>
            <person name="Yusupov M.M."/>
            <person name="Yusupova G.Z."/>
            <person name="Baucom A."/>
            <person name="Lieberman K."/>
            <person name="Earnest T.N."/>
            <person name="Cate J.H.D."/>
            <person name="Noller H.F."/>
        </authorList>
    </citation>
    <scope>X-RAY CRYSTALLOGRAPHY (5.5 ANGSTROMS) OF THE RIBOSOME</scope>
</reference>
<reference key="12">
    <citation type="journal article" date="2001" name="Science">
        <title>Recognition of cognate transfer RNA by the 30S ribosomal subunit.</title>
        <authorList>
            <person name="Ogle J.M."/>
            <person name="Brodersen D.E."/>
            <person name="Clemons W.M. Jr."/>
            <person name="Tarry M.J."/>
            <person name="Carter A.P."/>
            <person name="Ramakrishnan V."/>
        </authorList>
    </citation>
    <scope>X-RAY CRYSTALLOGRAPHY (3.11 ANGSTROMS) OF THE 30S SUBUNIT</scope>
</reference>
<reference key="13">
    <citation type="journal article" date="2002" name="J. Mol. Biol.">
        <title>Crystal structure of the 30S ribosomal subunit from Thermus thermophilus: structure of the proteins and their interactions with 16S RNA.</title>
        <authorList>
            <person name="Brodersen D.E."/>
            <person name="Clemons W.M. Jr."/>
            <person name="Carter A.P."/>
            <person name="Wimberly B.T."/>
            <person name="Ramakrishnan V."/>
        </authorList>
    </citation>
    <scope>X-RAY CRYSTALLOGRAPHY (3.05 ANGSTROMS) OF THE 30S SUBUNIT</scope>
</reference>
<reference key="14">
    <citation type="journal article" date="2005" name="Mol. Cell">
        <title>Interaction of Era with the 30S ribosomal subunit implications for 30S subunit assembly.</title>
        <authorList>
            <person name="Sharma M.R."/>
            <person name="Barat C."/>
            <person name="Wilson D.N."/>
            <person name="Booth T.M."/>
            <person name="Kawazoe M."/>
            <person name="Hori-Takemoto C."/>
            <person name="Shirouzu M."/>
            <person name="Yokoyama S."/>
            <person name="Fucini P."/>
            <person name="Agrawal R.K."/>
        </authorList>
    </citation>
    <scope>STRUCTURE BY ELECTRON MICROSCOPY (13.50 ANGSTROMS)</scope>
    <scope>POSSIBLE INTERACTION WITH ERA</scope>
</reference>
<reference key="15">
    <citation type="journal article" date="2005" name="Cell">
        <title>Crystal structures of the ribosome in complex with release factors RF1 and RF2 bound to a cognate stop codon.</title>
        <authorList>
            <person name="Petry S."/>
            <person name="Brodersen D.E."/>
            <person name="Murphy F.V."/>
            <person name="Dunham C.M."/>
            <person name="Selmer M."/>
            <person name="Tarry M.J."/>
            <person name="Kelley A.C."/>
            <person name="Ramakrishnan V."/>
        </authorList>
    </citation>
    <scope>X-RAY CRYSTALLOGRAPHY (5.90 ANGSTROMS) OF 70S RIBOSOME IN COMPLEX WITH RF1 OR RF2</scope>
    <scope>SUBUNIT</scope>
</reference>
<reference key="16">
    <citation type="journal article" date="2008" name="Science">
        <title>Insights into translational termination from the structure of RF2 bound to the ribosome.</title>
        <authorList>
            <person name="Weixlbaumer A."/>
            <person name="Jin H."/>
            <person name="Neubauer C."/>
            <person name="Voorhees R.M."/>
            <person name="Petry S."/>
            <person name="Kelley A.C."/>
            <person name="Ramakrishnan V."/>
        </authorList>
    </citation>
    <scope>X-RAY CRYSTALLOGRAPHY (3.45 ANGSTROMS) OF 70S RIBOSOME IN COMPLEX WITH RF2</scope>
    <scope>SUBUNIT</scope>
</reference>
<reference key="17">
    <citation type="journal article" date="2010" name="Proc. Natl. Acad. Sci. U.S.A.">
        <title>Structure of the 70S ribosome bound to release factor 2 and a substrate analog provides insights into catalysis of peptide release.</title>
        <authorList>
            <person name="Jin H."/>
            <person name="Kelley A.C."/>
            <person name="Loakes D."/>
            <person name="Ramakrishnan V."/>
        </authorList>
    </citation>
    <scope>X-RAY CRYSTALLOGRAPHY (3.10 ANGSTROMS) OF 70S RIBOSOME IN COMPLEX WITH RF2</scope>
    <scope>SUBUNIT</scope>
</reference>
<gene>
    <name type="primary">rpsB</name>
    <name type="synonym">rps2</name>
    <name type="ordered locus">TTHA0861</name>
</gene>
<dbReference type="EMBL" id="AP008226">
    <property type="protein sequence ID" value="BAD70684.1"/>
    <property type="molecule type" value="Genomic_DNA"/>
</dbReference>
<dbReference type="EMBL" id="X83598">
    <property type="protein sequence ID" value="CAA58577.1"/>
    <property type="molecule type" value="Genomic_DNA"/>
</dbReference>
<dbReference type="PIR" id="S51053">
    <property type="entry name" value="S51053"/>
</dbReference>
<dbReference type="RefSeq" id="WP_011172954.1">
    <property type="nucleotide sequence ID" value="NC_006461.1"/>
</dbReference>
<dbReference type="RefSeq" id="YP_144127.1">
    <property type="nucleotide sequence ID" value="NC_006461.1"/>
</dbReference>
<dbReference type="PDB" id="1FJG">
    <property type="method" value="X-ray"/>
    <property type="resolution" value="3.00 A"/>
    <property type="chains" value="B=1-256"/>
</dbReference>
<dbReference type="PDB" id="1HNW">
    <property type="method" value="X-ray"/>
    <property type="resolution" value="3.40 A"/>
    <property type="chains" value="B=1-256"/>
</dbReference>
<dbReference type="PDB" id="1HNX">
    <property type="method" value="X-ray"/>
    <property type="resolution" value="3.40 A"/>
    <property type="chains" value="B=1-256"/>
</dbReference>
<dbReference type="PDB" id="1HNZ">
    <property type="method" value="X-ray"/>
    <property type="resolution" value="3.30 A"/>
    <property type="chains" value="B=1-256"/>
</dbReference>
<dbReference type="PDB" id="1HR0">
    <property type="method" value="X-ray"/>
    <property type="resolution" value="3.20 A"/>
    <property type="chains" value="B=1-256"/>
</dbReference>
<dbReference type="PDB" id="1I94">
    <property type="method" value="X-ray"/>
    <property type="resolution" value="3.20 A"/>
    <property type="chains" value="B=2-256"/>
</dbReference>
<dbReference type="PDB" id="1I95">
    <property type="method" value="X-ray"/>
    <property type="resolution" value="4.50 A"/>
    <property type="chains" value="B=2-256"/>
</dbReference>
<dbReference type="PDB" id="1I96">
    <property type="method" value="X-ray"/>
    <property type="resolution" value="4.20 A"/>
    <property type="chains" value="B=2-256"/>
</dbReference>
<dbReference type="PDB" id="1I97">
    <property type="method" value="X-ray"/>
    <property type="resolution" value="4.50 A"/>
    <property type="chains" value="B=2-256"/>
</dbReference>
<dbReference type="PDB" id="1IBK">
    <property type="method" value="X-ray"/>
    <property type="resolution" value="3.31 A"/>
    <property type="chains" value="B=1-256"/>
</dbReference>
<dbReference type="PDB" id="1IBL">
    <property type="method" value="X-ray"/>
    <property type="resolution" value="3.11 A"/>
    <property type="chains" value="B=1-256"/>
</dbReference>
<dbReference type="PDB" id="1IBM">
    <property type="method" value="X-ray"/>
    <property type="resolution" value="3.31 A"/>
    <property type="chains" value="B=1-256"/>
</dbReference>
<dbReference type="PDB" id="1J5E">
    <property type="method" value="X-ray"/>
    <property type="resolution" value="3.05 A"/>
    <property type="chains" value="B=1-256"/>
</dbReference>
<dbReference type="PDB" id="1JGO">
    <property type="method" value="X-ray"/>
    <property type="resolution" value="5.60 A"/>
    <property type="chains" value="E=1-256"/>
</dbReference>
<dbReference type="PDB" id="1JGP">
    <property type="method" value="X-ray"/>
    <property type="resolution" value="7.00 A"/>
    <property type="chains" value="E=1-256"/>
</dbReference>
<dbReference type="PDB" id="1JGQ">
    <property type="method" value="X-ray"/>
    <property type="resolution" value="5.00 A"/>
    <property type="chains" value="E=1-256"/>
</dbReference>
<dbReference type="PDB" id="1ML5">
    <property type="method" value="EM"/>
    <property type="resolution" value="14.00 A"/>
    <property type="chains" value="E=1-256"/>
</dbReference>
<dbReference type="PDB" id="1N32">
    <property type="method" value="X-ray"/>
    <property type="resolution" value="3.00 A"/>
    <property type="chains" value="B=1-256"/>
</dbReference>
<dbReference type="PDB" id="1N33">
    <property type="method" value="X-ray"/>
    <property type="resolution" value="3.35 A"/>
    <property type="chains" value="B=1-256"/>
</dbReference>
<dbReference type="PDB" id="1N34">
    <property type="method" value="X-ray"/>
    <property type="resolution" value="3.80 A"/>
    <property type="chains" value="B=1-256"/>
</dbReference>
<dbReference type="PDB" id="1N36">
    <property type="method" value="X-ray"/>
    <property type="resolution" value="3.65 A"/>
    <property type="chains" value="B=1-256"/>
</dbReference>
<dbReference type="PDB" id="1VVJ">
    <property type="method" value="X-ray"/>
    <property type="resolution" value="3.44 A"/>
    <property type="chains" value="QB/XB=1-256"/>
</dbReference>
<dbReference type="PDB" id="1VY4">
    <property type="method" value="X-ray"/>
    <property type="resolution" value="2.60 A"/>
    <property type="chains" value="AB/CB=1-256"/>
</dbReference>
<dbReference type="PDB" id="1VY5">
    <property type="method" value="X-ray"/>
    <property type="resolution" value="2.55 A"/>
    <property type="chains" value="AB/CB=1-256"/>
</dbReference>
<dbReference type="PDB" id="1VY6">
    <property type="method" value="X-ray"/>
    <property type="resolution" value="2.90 A"/>
    <property type="chains" value="AB/CB=1-256"/>
</dbReference>
<dbReference type="PDB" id="1VY7">
    <property type="method" value="X-ray"/>
    <property type="resolution" value="2.80 A"/>
    <property type="chains" value="AB/CB=1-256"/>
</dbReference>
<dbReference type="PDB" id="1X18">
    <property type="method" value="EM"/>
    <property type="resolution" value="13.50 A"/>
    <property type="chains" value="E=7-240"/>
</dbReference>
<dbReference type="PDB" id="1XMO">
    <property type="method" value="X-ray"/>
    <property type="resolution" value="3.25 A"/>
    <property type="chains" value="B=1-256"/>
</dbReference>
<dbReference type="PDB" id="1XMQ">
    <property type="method" value="X-ray"/>
    <property type="resolution" value="3.00 A"/>
    <property type="chains" value="B=1-256"/>
</dbReference>
<dbReference type="PDB" id="1XNQ">
    <property type="method" value="X-ray"/>
    <property type="resolution" value="3.05 A"/>
    <property type="chains" value="B=1-256"/>
</dbReference>
<dbReference type="PDB" id="1XNR">
    <property type="method" value="X-ray"/>
    <property type="resolution" value="3.10 A"/>
    <property type="chains" value="B=1-256"/>
</dbReference>
<dbReference type="PDB" id="2E5L">
    <property type="method" value="X-ray"/>
    <property type="resolution" value="3.30 A"/>
    <property type="chains" value="B=2-228"/>
</dbReference>
<dbReference type="PDB" id="2F4V">
    <property type="method" value="X-ray"/>
    <property type="resolution" value="3.80 A"/>
    <property type="chains" value="B=1-256"/>
</dbReference>
<dbReference type="PDB" id="2HHH">
    <property type="method" value="X-ray"/>
    <property type="resolution" value="3.35 A"/>
    <property type="chains" value="B=1-256"/>
</dbReference>
<dbReference type="PDB" id="2OM7">
    <property type="method" value="EM"/>
    <property type="resolution" value="7.30 A"/>
    <property type="chains" value="N=1-256"/>
</dbReference>
<dbReference type="PDB" id="2UU9">
    <property type="method" value="X-ray"/>
    <property type="resolution" value="3.10 A"/>
    <property type="chains" value="B=2-256"/>
</dbReference>
<dbReference type="PDB" id="2UUA">
    <property type="method" value="X-ray"/>
    <property type="resolution" value="2.90 A"/>
    <property type="chains" value="B=2-256"/>
</dbReference>
<dbReference type="PDB" id="2UUB">
    <property type="method" value="X-ray"/>
    <property type="resolution" value="2.80 A"/>
    <property type="chains" value="B=2-256"/>
</dbReference>
<dbReference type="PDB" id="2UUC">
    <property type="method" value="X-ray"/>
    <property type="resolution" value="3.10 A"/>
    <property type="chains" value="B=2-256"/>
</dbReference>
<dbReference type="PDB" id="2UXB">
    <property type="method" value="X-ray"/>
    <property type="resolution" value="3.10 A"/>
    <property type="chains" value="B=2-256"/>
</dbReference>
<dbReference type="PDB" id="2UXC">
    <property type="method" value="X-ray"/>
    <property type="resolution" value="2.90 A"/>
    <property type="chains" value="B=2-256"/>
</dbReference>
<dbReference type="PDB" id="2UXD">
    <property type="method" value="X-ray"/>
    <property type="resolution" value="3.20 A"/>
    <property type="chains" value="B=2-256"/>
</dbReference>
<dbReference type="PDB" id="2VQE">
    <property type="method" value="X-ray"/>
    <property type="resolution" value="2.50 A"/>
    <property type="chains" value="B=1-256"/>
</dbReference>
<dbReference type="PDB" id="2VQF">
    <property type="method" value="X-ray"/>
    <property type="resolution" value="2.90 A"/>
    <property type="chains" value="B=1-256"/>
</dbReference>
<dbReference type="PDB" id="2ZM6">
    <property type="method" value="X-ray"/>
    <property type="resolution" value="3.30 A"/>
    <property type="chains" value="B=2-256"/>
</dbReference>
<dbReference type="PDB" id="3OTO">
    <property type="method" value="X-ray"/>
    <property type="resolution" value="3.69 A"/>
    <property type="chains" value="B=1-256"/>
</dbReference>
<dbReference type="PDB" id="3T1H">
    <property type="method" value="X-ray"/>
    <property type="resolution" value="3.11 A"/>
    <property type="chains" value="B=1-256"/>
</dbReference>
<dbReference type="PDB" id="3T1Y">
    <property type="method" value="X-ray"/>
    <property type="resolution" value="2.80 A"/>
    <property type="chains" value="B=1-256"/>
</dbReference>
<dbReference type="PDB" id="4AQY">
    <property type="method" value="X-ray"/>
    <property type="resolution" value="3.50 A"/>
    <property type="chains" value="B=1-256"/>
</dbReference>
<dbReference type="PDB" id="4B3M">
    <property type="method" value="X-ray"/>
    <property type="resolution" value="2.90 A"/>
    <property type="chains" value="B=1-256"/>
</dbReference>
<dbReference type="PDB" id="4B3R">
    <property type="method" value="X-ray"/>
    <property type="resolution" value="3.00 A"/>
    <property type="chains" value="B=1-256"/>
</dbReference>
<dbReference type="PDB" id="4B3S">
    <property type="method" value="X-ray"/>
    <property type="resolution" value="3.15 A"/>
    <property type="chains" value="B=1-256"/>
</dbReference>
<dbReference type="PDB" id="4B3T">
    <property type="method" value="X-ray"/>
    <property type="resolution" value="3.00 A"/>
    <property type="chains" value="B=1-256"/>
</dbReference>
<dbReference type="PDB" id="4DR1">
    <property type="method" value="X-ray"/>
    <property type="resolution" value="3.60 A"/>
    <property type="chains" value="B=1-256"/>
</dbReference>
<dbReference type="PDB" id="4DR2">
    <property type="method" value="X-ray"/>
    <property type="resolution" value="3.25 A"/>
    <property type="chains" value="B=1-256"/>
</dbReference>
<dbReference type="PDB" id="4DR3">
    <property type="method" value="X-ray"/>
    <property type="resolution" value="3.35 A"/>
    <property type="chains" value="B=1-256"/>
</dbReference>
<dbReference type="PDB" id="4DR4">
    <property type="method" value="X-ray"/>
    <property type="resolution" value="3.97 A"/>
    <property type="chains" value="B=1-256"/>
</dbReference>
<dbReference type="PDB" id="4DR5">
    <property type="method" value="X-ray"/>
    <property type="resolution" value="3.45 A"/>
    <property type="chains" value="B=1-256"/>
</dbReference>
<dbReference type="PDB" id="4DR6">
    <property type="method" value="X-ray"/>
    <property type="resolution" value="3.30 A"/>
    <property type="chains" value="B=1-256"/>
</dbReference>
<dbReference type="PDB" id="4DR7">
    <property type="method" value="X-ray"/>
    <property type="resolution" value="3.75 A"/>
    <property type="chains" value="B=1-256"/>
</dbReference>
<dbReference type="PDB" id="4DUY">
    <property type="method" value="X-ray"/>
    <property type="resolution" value="3.39 A"/>
    <property type="chains" value="B=1-256"/>
</dbReference>
<dbReference type="PDB" id="4DUZ">
    <property type="method" value="X-ray"/>
    <property type="resolution" value="3.65 A"/>
    <property type="chains" value="B=1-256"/>
</dbReference>
<dbReference type="PDB" id="4DV0">
    <property type="method" value="X-ray"/>
    <property type="resolution" value="3.85 A"/>
    <property type="chains" value="B=1-256"/>
</dbReference>
<dbReference type="PDB" id="4DV1">
    <property type="method" value="X-ray"/>
    <property type="resolution" value="3.85 A"/>
    <property type="chains" value="B=1-256"/>
</dbReference>
<dbReference type="PDB" id="4DV2">
    <property type="method" value="X-ray"/>
    <property type="resolution" value="3.65 A"/>
    <property type="chains" value="B=1-256"/>
</dbReference>
<dbReference type="PDB" id="4DV3">
    <property type="method" value="X-ray"/>
    <property type="resolution" value="3.55 A"/>
    <property type="chains" value="B=1-256"/>
</dbReference>
<dbReference type="PDB" id="4DV4">
    <property type="method" value="X-ray"/>
    <property type="resolution" value="3.65 A"/>
    <property type="chains" value="B=1-256"/>
</dbReference>
<dbReference type="PDB" id="4DV5">
    <property type="method" value="X-ray"/>
    <property type="resolution" value="3.68 A"/>
    <property type="chains" value="B=1-256"/>
</dbReference>
<dbReference type="PDB" id="4DV6">
    <property type="method" value="X-ray"/>
    <property type="resolution" value="3.30 A"/>
    <property type="chains" value="B=1-256"/>
</dbReference>
<dbReference type="PDB" id="4DV7">
    <property type="method" value="X-ray"/>
    <property type="resolution" value="3.29 A"/>
    <property type="chains" value="B=1-256"/>
</dbReference>
<dbReference type="PDB" id="4GKJ">
    <property type="method" value="X-ray"/>
    <property type="resolution" value="3.30 A"/>
    <property type="chains" value="B=7-240"/>
</dbReference>
<dbReference type="PDB" id="4GKK">
    <property type="method" value="X-ray"/>
    <property type="resolution" value="3.20 A"/>
    <property type="chains" value="B=7-240"/>
</dbReference>
<dbReference type="PDB" id="4JI0">
    <property type="method" value="X-ray"/>
    <property type="resolution" value="3.49 A"/>
    <property type="chains" value="B=1-256"/>
</dbReference>
<dbReference type="PDB" id="4JI1">
    <property type="method" value="X-ray"/>
    <property type="resolution" value="3.14 A"/>
    <property type="chains" value="B=1-256"/>
</dbReference>
<dbReference type="PDB" id="4JI2">
    <property type="method" value="X-ray"/>
    <property type="resolution" value="3.64 A"/>
    <property type="chains" value="B=1-256"/>
</dbReference>
<dbReference type="PDB" id="4JI3">
    <property type="method" value="X-ray"/>
    <property type="resolution" value="3.35 A"/>
    <property type="chains" value="B=1-256"/>
</dbReference>
<dbReference type="PDB" id="4JI4">
    <property type="method" value="X-ray"/>
    <property type="resolution" value="3.69 A"/>
    <property type="chains" value="B=1-256"/>
</dbReference>
<dbReference type="PDB" id="4JI5">
    <property type="method" value="X-ray"/>
    <property type="resolution" value="3.85 A"/>
    <property type="chains" value="B=1-256"/>
</dbReference>
<dbReference type="PDB" id="4JI6">
    <property type="method" value="X-ray"/>
    <property type="resolution" value="3.55 A"/>
    <property type="chains" value="B=1-256"/>
</dbReference>
<dbReference type="PDB" id="4JI7">
    <property type="method" value="X-ray"/>
    <property type="resolution" value="3.50 A"/>
    <property type="chains" value="B=1-256"/>
</dbReference>
<dbReference type="PDB" id="4JI8">
    <property type="method" value="X-ray"/>
    <property type="resolution" value="3.74 A"/>
    <property type="chains" value="B=1-256"/>
</dbReference>
<dbReference type="PDB" id="4JV5">
    <property type="method" value="X-ray"/>
    <property type="resolution" value="3.16 A"/>
    <property type="chains" value="B=7-240"/>
</dbReference>
<dbReference type="PDB" id="4JYA">
    <property type="method" value="X-ray"/>
    <property type="resolution" value="3.10 A"/>
    <property type="chains" value="B=7-240"/>
</dbReference>
<dbReference type="PDB" id="4K0K">
    <property type="method" value="X-ray"/>
    <property type="resolution" value="3.40 A"/>
    <property type="chains" value="B=7-241"/>
</dbReference>
<dbReference type="PDB" id="4KHP">
    <property type="method" value="X-ray"/>
    <property type="resolution" value="3.10 A"/>
    <property type="chains" value="B=7-240"/>
</dbReference>
<dbReference type="PDB" id="4L47">
    <property type="method" value="X-ray"/>
    <property type="resolution" value="3.22 A"/>
    <property type="chains" value="QB/XB=1-256"/>
</dbReference>
<dbReference type="PDB" id="4L71">
    <property type="method" value="X-ray"/>
    <property type="resolution" value="3.90 A"/>
    <property type="chains" value="QB/XB=1-256"/>
</dbReference>
<dbReference type="PDB" id="4LEL">
    <property type="method" value="X-ray"/>
    <property type="resolution" value="3.90 A"/>
    <property type="chains" value="QB/XB=1-256"/>
</dbReference>
<dbReference type="PDB" id="4LF4">
    <property type="method" value="X-ray"/>
    <property type="resolution" value="3.34 A"/>
    <property type="chains" value="B=1-256"/>
</dbReference>
<dbReference type="PDB" id="4LF5">
    <property type="method" value="X-ray"/>
    <property type="resolution" value="3.75 A"/>
    <property type="chains" value="B=1-256"/>
</dbReference>
<dbReference type="PDB" id="4LF6">
    <property type="method" value="X-ray"/>
    <property type="resolution" value="3.31 A"/>
    <property type="chains" value="B=1-256"/>
</dbReference>
<dbReference type="PDB" id="4LF7">
    <property type="method" value="X-ray"/>
    <property type="resolution" value="3.15 A"/>
    <property type="chains" value="B=1-256"/>
</dbReference>
<dbReference type="PDB" id="4LF8">
    <property type="method" value="X-ray"/>
    <property type="resolution" value="3.15 A"/>
    <property type="chains" value="B=1-256"/>
</dbReference>
<dbReference type="PDB" id="4LF9">
    <property type="method" value="X-ray"/>
    <property type="resolution" value="3.28 A"/>
    <property type="chains" value="B=1-256"/>
</dbReference>
<dbReference type="PDB" id="4LFA">
    <property type="method" value="X-ray"/>
    <property type="resolution" value="3.65 A"/>
    <property type="chains" value="B=1-256"/>
</dbReference>
<dbReference type="PDB" id="4LFB">
    <property type="method" value="X-ray"/>
    <property type="resolution" value="3.01 A"/>
    <property type="chains" value="B=1-256"/>
</dbReference>
<dbReference type="PDB" id="4LFC">
    <property type="method" value="X-ray"/>
    <property type="resolution" value="3.60 A"/>
    <property type="chains" value="B=1-256"/>
</dbReference>
<dbReference type="PDB" id="4LFZ">
    <property type="method" value="X-ray"/>
    <property type="resolution" value="3.92 A"/>
    <property type="chains" value="QB/XB=1-256"/>
</dbReference>
<dbReference type="PDB" id="4LNT">
    <property type="method" value="X-ray"/>
    <property type="resolution" value="2.94 A"/>
    <property type="chains" value="QB/XB=1-256"/>
</dbReference>
<dbReference type="PDB" id="4LSK">
    <property type="method" value="X-ray"/>
    <property type="resolution" value="3.48 A"/>
    <property type="chains" value="QB/XB=1-256"/>
</dbReference>
<dbReference type="PDB" id="4LT8">
    <property type="method" value="X-ray"/>
    <property type="resolution" value="3.14 A"/>
    <property type="chains" value="QB/XB=1-256"/>
</dbReference>
<dbReference type="PDB" id="4NXM">
    <property type="method" value="X-ray"/>
    <property type="resolution" value="3.65 A"/>
    <property type="chains" value="B=1-256"/>
</dbReference>
<dbReference type="PDB" id="4NXN">
    <property type="method" value="X-ray"/>
    <property type="resolution" value="3.54 A"/>
    <property type="chains" value="B=1-256"/>
</dbReference>
<dbReference type="PDB" id="4OX9">
    <property type="method" value="X-ray"/>
    <property type="resolution" value="3.80 A"/>
    <property type="chains" value="B=1-256"/>
</dbReference>
<dbReference type="PDB" id="4P6F">
    <property type="method" value="X-ray"/>
    <property type="resolution" value="3.60 A"/>
    <property type="chains" value="QB/XB=1-256"/>
</dbReference>
<dbReference type="PDB" id="4P70">
    <property type="method" value="X-ray"/>
    <property type="resolution" value="3.68 A"/>
    <property type="chains" value="QB/XB=1-256"/>
</dbReference>
<dbReference type="PDB" id="4TUA">
    <property type="method" value="X-ray"/>
    <property type="resolution" value="3.60 A"/>
    <property type="chains" value="QB/XB=1-256"/>
</dbReference>
<dbReference type="PDB" id="4TUB">
    <property type="method" value="X-ray"/>
    <property type="resolution" value="3.60 A"/>
    <property type="chains" value="QB/XB=1-256"/>
</dbReference>
<dbReference type="PDB" id="4TUC">
    <property type="method" value="X-ray"/>
    <property type="resolution" value="3.60 A"/>
    <property type="chains" value="QB/XB=1-256"/>
</dbReference>
<dbReference type="PDB" id="4TUD">
    <property type="method" value="X-ray"/>
    <property type="resolution" value="3.60 A"/>
    <property type="chains" value="QB/XB=1-256"/>
</dbReference>
<dbReference type="PDB" id="4TUE">
    <property type="method" value="X-ray"/>
    <property type="resolution" value="3.50 A"/>
    <property type="chains" value="QB/XB=1-256"/>
</dbReference>
<dbReference type="PDB" id="4V42">
    <property type="method" value="X-ray"/>
    <property type="resolution" value="5.50 A"/>
    <property type="chains" value="AE=1-256"/>
</dbReference>
<dbReference type="PDB" id="4V49">
    <property type="method" value="X-ray"/>
    <property type="resolution" value="8.70 A"/>
    <property type="chains" value="B=7-240"/>
</dbReference>
<dbReference type="PDB" id="4V4A">
    <property type="method" value="X-ray"/>
    <property type="resolution" value="9.50 A"/>
    <property type="chains" value="B=7-240"/>
</dbReference>
<dbReference type="PDB" id="4V4P">
    <property type="method" value="X-ray"/>
    <property type="resolution" value="5.50 A"/>
    <property type="chains" value="BE=1-256"/>
</dbReference>
<dbReference type="PDB" id="4V4R">
    <property type="method" value="X-ray"/>
    <property type="resolution" value="5.90 A"/>
    <property type="chains" value="AB=1-256"/>
</dbReference>
<dbReference type="PDB" id="4V4S">
    <property type="method" value="X-ray"/>
    <property type="resolution" value="6.76 A"/>
    <property type="chains" value="AB=1-256"/>
</dbReference>
<dbReference type="PDB" id="4V4T">
    <property type="method" value="X-ray"/>
    <property type="resolution" value="6.46 A"/>
    <property type="chains" value="AB=1-256"/>
</dbReference>
<dbReference type="PDB" id="4V4X">
    <property type="method" value="X-ray"/>
    <property type="resolution" value="5.00 A"/>
    <property type="chains" value="AE=1-256"/>
</dbReference>
<dbReference type="PDB" id="4V4Y">
    <property type="method" value="X-ray"/>
    <property type="resolution" value="5.50 A"/>
    <property type="chains" value="AE=1-256"/>
</dbReference>
<dbReference type="PDB" id="4V4Z">
    <property type="method" value="X-ray"/>
    <property type="resolution" value="4.51 A"/>
    <property type="chains" value="AE=1-256"/>
</dbReference>
<dbReference type="PDB" id="4V51">
    <property type="method" value="X-ray"/>
    <property type="resolution" value="2.80 A"/>
    <property type="chains" value="AB/CB=2-256"/>
</dbReference>
<dbReference type="PDB" id="4V5A">
    <property type="method" value="X-ray"/>
    <property type="resolution" value="3.50 A"/>
    <property type="chains" value="AB/CB=2-256"/>
</dbReference>
<dbReference type="PDB" id="4V5C">
    <property type="method" value="X-ray"/>
    <property type="resolution" value="3.30 A"/>
    <property type="chains" value="AB/CB=1-256"/>
</dbReference>
<dbReference type="PDB" id="4V5D">
    <property type="method" value="X-ray"/>
    <property type="resolution" value="3.50 A"/>
    <property type="chains" value="AB/CB=1-256"/>
</dbReference>
<dbReference type="PDB" id="4V5E">
    <property type="method" value="X-ray"/>
    <property type="resolution" value="3.45 A"/>
    <property type="chains" value="AB/CB=1-256"/>
</dbReference>
<dbReference type="PDB" id="4V5F">
    <property type="method" value="X-ray"/>
    <property type="resolution" value="3.60 A"/>
    <property type="chains" value="AB/CB=1-256"/>
</dbReference>
<dbReference type="PDB" id="4V5G">
    <property type="method" value="X-ray"/>
    <property type="resolution" value="3.60 A"/>
    <property type="chains" value="AB/CB=1-256"/>
</dbReference>
<dbReference type="PDB" id="4V5J">
    <property type="method" value="X-ray"/>
    <property type="resolution" value="3.10 A"/>
    <property type="chains" value="AB/CB=1-256"/>
</dbReference>
<dbReference type="PDB" id="4V5K">
    <property type="method" value="X-ray"/>
    <property type="resolution" value="3.20 A"/>
    <property type="chains" value="AB/CB=1-256"/>
</dbReference>
<dbReference type="PDB" id="4V5L">
    <property type="method" value="X-ray"/>
    <property type="resolution" value="3.10 A"/>
    <property type="chains" value="AB=1-256"/>
</dbReference>
<dbReference type="PDB" id="4V5M">
    <property type="method" value="EM"/>
    <property type="resolution" value="7.80 A"/>
    <property type="chains" value="AB=1-256"/>
</dbReference>
<dbReference type="PDB" id="4V5N">
    <property type="method" value="EM"/>
    <property type="resolution" value="7.60 A"/>
    <property type="chains" value="AB=1-256"/>
</dbReference>
<dbReference type="PDB" id="4V5P">
    <property type="method" value="X-ray"/>
    <property type="resolution" value="3.10 A"/>
    <property type="chains" value="AB/CB=1-256"/>
</dbReference>
<dbReference type="PDB" id="4V5Q">
    <property type="method" value="X-ray"/>
    <property type="resolution" value="3.10 A"/>
    <property type="chains" value="AB/CB=1-256"/>
</dbReference>
<dbReference type="PDB" id="4V5R">
    <property type="method" value="X-ray"/>
    <property type="resolution" value="3.10 A"/>
    <property type="chains" value="AB/CB=1-256"/>
</dbReference>
<dbReference type="PDB" id="4V5S">
    <property type="method" value="X-ray"/>
    <property type="resolution" value="3.10 A"/>
    <property type="chains" value="AB/CB=1-256"/>
</dbReference>
<dbReference type="PDB" id="4V68">
    <property type="method" value="EM"/>
    <property type="resolution" value="6.40 A"/>
    <property type="chains" value="AB=7-241"/>
</dbReference>
<dbReference type="PDB" id="4V6A">
    <property type="method" value="X-ray"/>
    <property type="resolution" value="3.10 A"/>
    <property type="chains" value="AB/CB=1-256"/>
</dbReference>
<dbReference type="PDB" id="4V6F">
    <property type="method" value="X-ray"/>
    <property type="resolution" value="3.10 A"/>
    <property type="chains" value="BE/CE=1-256"/>
</dbReference>
<dbReference type="PDB" id="4V6G">
    <property type="method" value="X-ray"/>
    <property type="resolution" value="3.50 A"/>
    <property type="chains" value="AE/CE=1-256"/>
</dbReference>
<dbReference type="PDB" id="4V7J">
    <property type="method" value="X-ray"/>
    <property type="resolution" value="3.30 A"/>
    <property type="chains" value="Ab/Bb=1-256"/>
</dbReference>
<dbReference type="PDB" id="4V7K">
    <property type="method" value="X-ray"/>
    <property type="resolution" value="3.60 A"/>
    <property type="chains" value="Ab/Bb=1-256"/>
</dbReference>
<dbReference type="PDB" id="4V7L">
    <property type="method" value="X-ray"/>
    <property type="resolution" value="3.00 A"/>
    <property type="chains" value="AB/CB=1-256"/>
</dbReference>
<dbReference type="PDB" id="4V7M">
    <property type="method" value="X-ray"/>
    <property type="resolution" value="3.45 A"/>
    <property type="chains" value="AB/CB=1-256"/>
</dbReference>
<dbReference type="PDB" id="4V7W">
    <property type="method" value="X-ray"/>
    <property type="resolution" value="3.00 A"/>
    <property type="chains" value="AB/CB=1-256"/>
</dbReference>
<dbReference type="PDB" id="4V7X">
    <property type="method" value="X-ray"/>
    <property type="resolution" value="3.00 A"/>
    <property type="chains" value="AB/CB=1-256"/>
</dbReference>
<dbReference type="PDB" id="4V7Y">
    <property type="method" value="X-ray"/>
    <property type="resolution" value="3.00 A"/>
    <property type="chains" value="AB/CB=1-256"/>
</dbReference>
<dbReference type="PDB" id="4V7Z">
    <property type="method" value="X-ray"/>
    <property type="resolution" value="3.10 A"/>
    <property type="chains" value="AB/CB=1-256"/>
</dbReference>
<dbReference type="PDB" id="4V87">
    <property type="method" value="X-ray"/>
    <property type="resolution" value="3.10 A"/>
    <property type="chains" value="BE/CE=1-256"/>
</dbReference>
<dbReference type="PDB" id="4V8A">
    <property type="method" value="X-ray"/>
    <property type="resolution" value="3.20 A"/>
    <property type="chains" value="CB/DB=1-256"/>
</dbReference>
<dbReference type="PDB" id="4V8B">
    <property type="method" value="X-ray"/>
    <property type="resolution" value="3.00 A"/>
    <property type="chains" value="AE/CE=1-256"/>
</dbReference>
<dbReference type="PDB" id="4V8C">
    <property type="method" value="X-ray"/>
    <property type="resolution" value="3.30 A"/>
    <property type="chains" value="CE/DE=1-256"/>
</dbReference>
<dbReference type="PDB" id="4V8D">
    <property type="method" value="X-ray"/>
    <property type="resolution" value="3.00 A"/>
    <property type="chains" value="AE/CE=1-256"/>
</dbReference>
<dbReference type="PDB" id="4V8E">
    <property type="method" value="X-ray"/>
    <property type="resolution" value="3.30 A"/>
    <property type="chains" value="BE/DE=1-256"/>
</dbReference>
<dbReference type="PDB" id="4V8F">
    <property type="method" value="X-ray"/>
    <property type="resolution" value="3.30 A"/>
    <property type="chains" value="BE/CE=1-256"/>
</dbReference>
<dbReference type="PDB" id="4V8G">
    <property type="method" value="X-ray"/>
    <property type="resolution" value="3.00 A"/>
    <property type="chains" value="AB/CB=1-256"/>
</dbReference>
<dbReference type="PDB" id="4V8H">
    <property type="method" value="X-ray"/>
    <property type="resolution" value="3.10 A"/>
    <property type="chains" value="AB/CB=1-256"/>
</dbReference>
<dbReference type="PDB" id="4V8I">
    <property type="method" value="X-ray"/>
    <property type="resolution" value="2.70 A"/>
    <property type="chains" value="AB/CB=1-256"/>
</dbReference>
<dbReference type="PDB" id="4V8J">
    <property type="method" value="X-ray"/>
    <property type="resolution" value="3.90 A"/>
    <property type="chains" value="AB/CB=1-256"/>
</dbReference>
<dbReference type="PDB" id="4V8N">
    <property type="method" value="X-ray"/>
    <property type="resolution" value="3.10 A"/>
    <property type="chains" value="AB/CB=1-256"/>
</dbReference>
<dbReference type="PDB" id="4V8O">
    <property type="method" value="X-ray"/>
    <property type="resolution" value="3.80 A"/>
    <property type="chains" value="AB=1-256"/>
</dbReference>
<dbReference type="PDB" id="4V8Q">
    <property type="method" value="X-ray"/>
    <property type="resolution" value="3.10 A"/>
    <property type="chains" value="BB=1-256"/>
</dbReference>
<dbReference type="PDB" id="4V8U">
    <property type="method" value="X-ray"/>
    <property type="resolution" value="3.70 A"/>
    <property type="chains" value="AB/CB=1-256"/>
</dbReference>
<dbReference type="PDB" id="4V8X">
    <property type="method" value="X-ray"/>
    <property type="resolution" value="3.35 A"/>
    <property type="chains" value="AB/CB=1-256"/>
</dbReference>
<dbReference type="PDB" id="4V90">
    <property type="method" value="X-ray"/>
    <property type="resolution" value="2.95 A"/>
    <property type="chains" value="AB=1-256"/>
</dbReference>
<dbReference type="PDB" id="4V95">
    <property type="method" value="X-ray"/>
    <property type="resolution" value="3.20 A"/>
    <property type="chains" value="AB/CB=1-256"/>
</dbReference>
<dbReference type="PDB" id="4V97">
    <property type="method" value="X-ray"/>
    <property type="resolution" value="3.52 A"/>
    <property type="chains" value="AB/CB=1-256"/>
</dbReference>
<dbReference type="PDB" id="4V9A">
    <property type="method" value="X-ray"/>
    <property type="resolution" value="3.30 A"/>
    <property type="chains" value="AE/CE=1-256"/>
</dbReference>
<dbReference type="PDB" id="4V9B">
    <property type="method" value="X-ray"/>
    <property type="resolution" value="3.10 A"/>
    <property type="chains" value="AE/CE=1-256"/>
</dbReference>
<dbReference type="PDB" id="4V9H">
    <property type="method" value="X-ray"/>
    <property type="resolution" value="2.86 A"/>
    <property type="chains" value="AB=7-240"/>
</dbReference>
<dbReference type="PDB" id="4V9I">
    <property type="method" value="X-ray"/>
    <property type="resolution" value="3.30 A"/>
    <property type="chains" value="AB/CB=7-240"/>
</dbReference>
<dbReference type="PDB" id="4V9R">
    <property type="method" value="X-ray"/>
    <property type="resolution" value="3.00 A"/>
    <property type="chains" value="AB/CB=1-256"/>
</dbReference>
<dbReference type="PDB" id="4V9S">
    <property type="method" value="X-ray"/>
    <property type="resolution" value="3.10 A"/>
    <property type="chains" value="AB/CB=1-256"/>
</dbReference>
<dbReference type="PDB" id="4W2E">
    <property type="method" value="X-ray"/>
    <property type="resolution" value="2.90 A"/>
    <property type="chains" value="b=1-256"/>
</dbReference>
<dbReference type="PDB" id="4W2F">
    <property type="method" value="X-ray"/>
    <property type="resolution" value="2.40 A"/>
    <property type="chains" value="AB/CB=1-256"/>
</dbReference>
<dbReference type="PDB" id="4W2G">
    <property type="method" value="X-ray"/>
    <property type="resolution" value="2.55 A"/>
    <property type="chains" value="AB/CB=1-256"/>
</dbReference>
<dbReference type="PDB" id="4W2H">
    <property type="method" value="X-ray"/>
    <property type="resolution" value="2.70 A"/>
    <property type="chains" value="AB/CB=1-256"/>
</dbReference>
<dbReference type="PDB" id="4W2I">
    <property type="method" value="X-ray"/>
    <property type="resolution" value="2.70 A"/>
    <property type="chains" value="AB/CB=1-256"/>
</dbReference>
<dbReference type="PDB" id="4W4G">
    <property type="method" value="X-ray"/>
    <property type="resolution" value="3.30 A"/>
    <property type="chains" value="QB/XB=1-256"/>
</dbReference>
<dbReference type="PDB" id="4WPO">
    <property type="method" value="X-ray"/>
    <property type="resolution" value="2.80 A"/>
    <property type="chains" value="BB/DB=1-256"/>
</dbReference>
<dbReference type="PDB" id="4WQ1">
    <property type="method" value="X-ray"/>
    <property type="resolution" value="3.10 A"/>
    <property type="chains" value="12/1E=1-256"/>
</dbReference>
<dbReference type="PDB" id="4WQF">
    <property type="method" value="X-ray"/>
    <property type="resolution" value="2.80 A"/>
    <property type="chains" value="BB/DB=1-256"/>
</dbReference>
<dbReference type="PDB" id="4WQR">
    <property type="method" value="X-ray"/>
    <property type="resolution" value="3.15 A"/>
    <property type="chains" value="12/1E=1-256"/>
</dbReference>
<dbReference type="PDB" id="4WQU">
    <property type="method" value="X-ray"/>
    <property type="resolution" value="2.80 A"/>
    <property type="chains" value="BB/DB=1-256"/>
</dbReference>
<dbReference type="PDB" id="4WQY">
    <property type="method" value="X-ray"/>
    <property type="resolution" value="2.80 A"/>
    <property type="chains" value="BB/DB=1-256"/>
</dbReference>
<dbReference type="PDB" id="4WR6">
    <property type="method" value="X-ray"/>
    <property type="resolution" value="3.05 A"/>
    <property type="chains" value="12/1E=1-256"/>
</dbReference>
<dbReference type="PDB" id="4WRA">
    <property type="method" value="X-ray"/>
    <property type="resolution" value="3.05 A"/>
    <property type="chains" value="12/1E=1-256"/>
</dbReference>
<dbReference type="PDB" id="4WRO">
    <property type="method" value="X-ray"/>
    <property type="resolution" value="3.05 A"/>
    <property type="chains" value="12/1E=1-256"/>
</dbReference>
<dbReference type="PDB" id="4WSD">
    <property type="method" value="X-ray"/>
    <property type="resolution" value="2.95 A"/>
    <property type="chains" value="12/1E=1-256"/>
</dbReference>
<dbReference type="PDB" id="4WSM">
    <property type="method" value="X-ray"/>
    <property type="resolution" value="3.30 A"/>
    <property type="chains" value="12/1E=1-256"/>
</dbReference>
<dbReference type="PDB" id="4WT1">
    <property type="method" value="X-ray"/>
    <property type="resolution" value="3.05 A"/>
    <property type="chains" value="12/1E=1-256"/>
</dbReference>
<dbReference type="PDB" id="4WT8">
    <property type="method" value="X-ray"/>
    <property type="resolution" value="3.40 A"/>
    <property type="chains" value="AA/BA=7-240"/>
</dbReference>
<dbReference type="PDB" id="4WU1">
    <property type="method" value="X-ray"/>
    <property type="resolution" value="3.20 A"/>
    <property type="chains" value="12/1E=1-256"/>
</dbReference>
<dbReference type="PDB" id="4WZD">
    <property type="method" value="X-ray"/>
    <property type="resolution" value="3.10 A"/>
    <property type="chains" value="12/1E=1-256"/>
</dbReference>
<dbReference type="PDB" id="4WZO">
    <property type="method" value="X-ray"/>
    <property type="resolution" value="3.30 A"/>
    <property type="chains" value="12/1E=1-256"/>
</dbReference>
<dbReference type="PDB" id="4X62">
    <property type="method" value="X-ray"/>
    <property type="resolution" value="3.45 A"/>
    <property type="chains" value="B=6-241"/>
</dbReference>
<dbReference type="PDB" id="4X64">
    <property type="method" value="X-ray"/>
    <property type="resolution" value="3.35 A"/>
    <property type="chains" value="B=6-241"/>
</dbReference>
<dbReference type="PDB" id="4X65">
    <property type="method" value="X-ray"/>
    <property type="resolution" value="3.35 A"/>
    <property type="chains" value="B=6-241"/>
</dbReference>
<dbReference type="PDB" id="4X66">
    <property type="method" value="X-ray"/>
    <property type="resolution" value="3.45 A"/>
    <property type="chains" value="B=6-241"/>
</dbReference>
<dbReference type="PDB" id="4Y4O">
    <property type="method" value="X-ray"/>
    <property type="resolution" value="2.30 A"/>
    <property type="chains" value="1b/2b=1-256"/>
</dbReference>
<dbReference type="PDB" id="4Y4P">
    <property type="method" value="X-ray"/>
    <property type="resolution" value="2.50 A"/>
    <property type="chains" value="1b/2b=1-256"/>
</dbReference>
<dbReference type="PDB" id="4YHH">
    <property type="method" value="X-ray"/>
    <property type="resolution" value="3.42 A"/>
    <property type="chains" value="B=3-228"/>
</dbReference>
<dbReference type="PDB" id="4YPB">
    <property type="method" value="X-ray"/>
    <property type="resolution" value="3.40 A"/>
    <property type="chains" value="QB/XB=1-256"/>
</dbReference>
<dbReference type="PDB" id="4YY3">
    <property type="method" value="X-ray"/>
    <property type="resolution" value="3.60 A"/>
    <property type="chains" value="B=1-256"/>
</dbReference>
<dbReference type="PDB" id="4YZV">
    <property type="method" value="X-ray"/>
    <property type="resolution" value="3.10 A"/>
    <property type="chains" value="QB/XB=1-256"/>
</dbReference>
<dbReference type="PDB" id="4Z3S">
    <property type="method" value="X-ray"/>
    <property type="resolution" value="2.65 A"/>
    <property type="chains" value="1b/2b=1-256"/>
</dbReference>
<dbReference type="PDB" id="4Z8C">
    <property type="method" value="X-ray"/>
    <property type="resolution" value="2.90 A"/>
    <property type="chains" value="1b/2b=1-256"/>
</dbReference>
<dbReference type="PDB" id="4ZER">
    <property type="method" value="X-ray"/>
    <property type="resolution" value="3.10 A"/>
    <property type="chains" value="1b/2b=7-237"/>
</dbReference>
<dbReference type="PDB" id="4ZSN">
    <property type="method" value="X-ray"/>
    <property type="resolution" value="3.60 A"/>
    <property type="chains" value="QB/XB=1-256"/>
</dbReference>
<dbReference type="PDB" id="5A9Z">
    <property type="method" value="EM"/>
    <property type="resolution" value="4.70 A"/>
    <property type="chains" value="BF=7-240"/>
</dbReference>
<dbReference type="PDB" id="5AA0">
    <property type="method" value="EM"/>
    <property type="resolution" value="5.00 A"/>
    <property type="chains" value="BF=7-240"/>
</dbReference>
<dbReference type="PDB" id="5BR8">
    <property type="method" value="X-ray"/>
    <property type="resolution" value="3.40 A"/>
    <property type="chains" value="B=1-256"/>
</dbReference>
<dbReference type="PDB" id="5CZP">
    <property type="method" value="X-ray"/>
    <property type="resolution" value="3.30 A"/>
    <property type="chains" value="QB/XB=1-256"/>
</dbReference>
<dbReference type="PDB" id="5D8B">
    <property type="method" value="X-ray"/>
    <property type="resolution" value="3.63 A"/>
    <property type="chains" value="CA/YB=1-256"/>
</dbReference>
<dbReference type="PDB" id="5DFE">
    <property type="method" value="X-ray"/>
    <property type="resolution" value="3.10 A"/>
    <property type="chains" value="QB/XB=1-256"/>
</dbReference>
<dbReference type="PDB" id="5DOX">
    <property type="method" value="X-ray"/>
    <property type="resolution" value="3.10 A"/>
    <property type="chains" value="1b/2b=1-256"/>
</dbReference>
<dbReference type="PDB" id="5DOY">
    <property type="method" value="X-ray"/>
    <property type="resolution" value="2.60 A"/>
    <property type="chains" value="1b/2b=1-256"/>
</dbReference>
<dbReference type="PDB" id="5E7K">
    <property type="method" value="X-ray"/>
    <property type="resolution" value="3.20 A"/>
    <property type="chains" value="12/1E=1-256"/>
</dbReference>
<dbReference type="PDB" id="5E81">
    <property type="method" value="X-ray"/>
    <property type="resolution" value="2.95 A"/>
    <property type="chains" value="12/1E=1-256"/>
</dbReference>
<dbReference type="PDB" id="5EL4">
    <property type="method" value="X-ray"/>
    <property type="resolution" value="3.15 A"/>
    <property type="chains" value="12/1E=1-256"/>
</dbReference>
<dbReference type="PDB" id="5EL5">
    <property type="method" value="X-ray"/>
    <property type="resolution" value="3.15 A"/>
    <property type="chains" value="12/1E=1-256"/>
</dbReference>
<dbReference type="PDB" id="5EL6">
    <property type="method" value="X-ray"/>
    <property type="resolution" value="3.10 A"/>
    <property type="chains" value="12/1E=1-256"/>
</dbReference>
<dbReference type="PDB" id="5EL7">
    <property type="method" value="X-ray"/>
    <property type="resolution" value="3.15 A"/>
    <property type="chains" value="12/1E=1-256"/>
</dbReference>
<dbReference type="PDB" id="5F8K">
    <property type="method" value="X-ray"/>
    <property type="resolution" value="2.80 A"/>
    <property type="chains" value="1b/2b=7-237"/>
</dbReference>
<dbReference type="PDB" id="5FDU">
    <property type="method" value="X-ray"/>
    <property type="resolution" value="2.90 A"/>
    <property type="chains" value="1b/2b=7-237"/>
</dbReference>
<dbReference type="PDB" id="5FDV">
    <property type="method" value="X-ray"/>
    <property type="resolution" value="2.80 A"/>
    <property type="chains" value="1b/2b=7-237"/>
</dbReference>
<dbReference type="PDB" id="5HAU">
    <property type="method" value="X-ray"/>
    <property type="resolution" value="3.00 A"/>
    <property type="chains" value="1b/2b=1-256"/>
</dbReference>
<dbReference type="PDB" id="5HCP">
    <property type="method" value="X-ray"/>
    <property type="resolution" value="2.89 A"/>
    <property type="chains" value="1b/2b=1-256"/>
</dbReference>
<dbReference type="PDB" id="5HCQ">
    <property type="method" value="X-ray"/>
    <property type="resolution" value="2.80 A"/>
    <property type="chains" value="1b/2b=1-256"/>
</dbReference>
<dbReference type="PDB" id="5HCR">
    <property type="method" value="X-ray"/>
    <property type="resolution" value="2.80 A"/>
    <property type="chains" value="1b/2b=1-256"/>
</dbReference>
<dbReference type="PDB" id="5HD1">
    <property type="method" value="X-ray"/>
    <property type="resolution" value="2.70 A"/>
    <property type="chains" value="1b/2b=1-256"/>
</dbReference>
<dbReference type="PDB" id="5IB7">
    <property type="method" value="X-ray"/>
    <property type="resolution" value="2.99 A"/>
    <property type="chains" value="12/1E=1-256"/>
</dbReference>
<dbReference type="PDB" id="5IB8">
    <property type="method" value="X-ray"/>
    <property type="resolution" value="3.13 A"/>
    <property type="chains" value="12/1E=1-256"/>
</dbReference>
<dbReference type="PDB" id="5IBB">
    <property type="method" value="X-ray"/>
    <property type="resolution" value="2.96 A"/>
    <property type="chains" value="12/1E=1-256"/>
</dbReference>
<dbReference type="PDB" id="5IMQ">
    <property type="method" value="EM"/>
    <property type="resolution" value="3.80 A"/>
    <property type="chains" value="F=1-256"/>
</dbReference>
<dbReference type="PDB" id="5IMR">
    <property type="method" value="EM"/>
    <property type="chains" value="F=1-256"/>
</dbReference>
<dbReference type="PDB" id="5IWA">
    <property type="method" value="X-ray"/>
    <property type="resolution" value="3.50 A"/>
    <property type="chains" value="B=3-228"/>
</dbReference>
<dbReference type="PDB" id="5J30">
    <property type="method" value="X-ray"/>
    <property type="resolution" value="3.20 A"/>
    <property type="chains" value="QB/XB=1-256"/>
</dbReference>
<dbReference type="PDB" id="5J3C">
    <property type="method" value="X-ray"/>
    <property type="resolution" value="3.04 A"/>
    <property type="chains" value="QB/XB=1-256"/>
</dbReference>
<dbReference type="PDB" id="5J4B">
    <property type="method" value="X-ray"/>
    <property type="resolution" value="2.60 A"/>
    <property type="chains" value="1b/2b=1-256"/>
</dbReference>
<dbReference type="PDB" id="5J4C">
    <property type="method" value="X-ray"/>
    <property type="resolution" value="2.80 A"/>
    <property type="chains" value="1b/2b=1-256"/>
</dbReference>
<dbReference type="PDB" id="5J8B">
    <property type="method" value="X-ray"/>
    <property type="resolution" value="2.60 A"/>
    <property type="chains" value="b=1-256"/>
</dbReference>
<dbReference type="PDB" id="5LMN">
    <property type="method" value="EM"/>
    <property type="resolution" value="3.55 A"/>
    <property type="chains" value="B=1-256"/>
</dbReference>
<dbReference type="PDB" id="5LMO">
    <property type="method" value="EM"/>
    <property type="resolution" value="4.30 A"/>
    <property type="chains" value="B=1-256"/>
</dbReference>
<dbReference type="PDB" id="5LMP">
    <property type="method" value="EM"/>
    <property type="resolution" value="5.35 A"/>
    <property type="chains" value="B=1-256"/>
</dbReference>
<dbReference type="PDB" id="5LMQ">
    <property type="method" value="EM"/>
    <property type="resolution" value="4.20 A"/>
    <property type="chains" value="B=1-256"/>
</dbReference>
<dbReference type="PDB" id="5LMR">
    <property type="method" value="EM"/>
    <property type="resolution" value="4.45 A"/>
    <property type="chains" value="B=1-256"/>
</dbReference>
<dbReference type="PDB" id="5LMS">
    <property type="method" value="EM"/>
    <property type="resolution" value="5.10 A"/>
    <property type="chains" value="B=1-256"/>
</dbReference>
<dbReference type="PDB" id="5LMT">
    <property type="method" value="EM"/>
    <property type="resolution" value="4.15 A"/>
    <property type="chains" value="B=1-256"/>
</dbReference>
<dbReference type="PDB" id="5LMU">
    <property type="method" value="EM"/>
    <property type="resolution" value="4.00 A"/>
    <property type="chains" value="B=1-256"/>
</dbReference>
<dbReference type="PDB" id="5LMV">
    <property type="method" value="EM"/>
    <property type="resolution" value="4.90 A"/>
    <property type="chains" value="B=1-256"/>
</dbReference>
<dbReference type="PDB" id="5NDJ">
    <property type="method" value="X-ray"/>
    <property type="resolution" value="3.15 A"/>
    <property type="chains" value="12/1E=1-256"/>
</dbReference>
<dbReference type="PDB" id="5NDK">
    <property type="method" value="X-ray"/>
    <property type="resolution" value="2.95 A"/>
    <property type="chains" value="12/1E=1-256"/>
</dbReference>
<dbReference type="PDB" id="5OT7">
    <property type="method" value="EM"/>
    <property type="resolution" value="3.80 A"/>
    <property type="chains" value="A=7-241"/>
</dbReference>
<dbReference type="PDB" id="5UQ7">
    <property type="method" value="EM"/>
    <property type="resolution" value="3.50 A"/>
    <property type="chains" value="b=7-237"/>
</dbReference>
<dbReference type="PDB" id="5UQ8">
    <property type="method" value="EM"/>
    <property type="resolution" value="3.20 A"/>
    <property type="chains" value="b=7-237"/>
</dbReference>
<dbReference type="PDB" id="5VP2">
    <property type="method" value="X-ray"/>
    <property type="resolution" value="2.80 A"/>
    <property type="chains" value="1b/2b=1-256"/>
</dbReference>
<dbReference type="PDB" id="5VPO">
    <property type="method" value="X-ray"/>
    <property type="resolution" value="3.34 A"/>
    <property type="chains" value="QB/XB=1-256"/>
</dbReference>
<dbReference type="PDB" id="5VPP">
    <property type="method" value="X-ray"/>
    <property type="resolution" value="3.90 A"/>
    <property type="chains" value="QB/XB=1-256"/>
</dbReference>
<dbReference type="PDB" id="5W4K">
    <property type="method" value="X-ray"/>
    <property type="resolution" value="2.70 A"/>
    <property type="chains" value="1b/2b=1-256"/>
</dbReference>
<dbReference type="PDB" id="5WIS">
    <property type="method" value="X-ray"/>
    <property type="resolution" value="2.70 A"/>
    <property type="chains" value="1b/2b=1-256"/>
</dbReference>
<dbReference type="PDB" id="5WIT">
    <property type="method" value="X-ray"/>
    <property type="resolution" value="2.60 A"/>
    <property type="chains" value="1b/2b=1-256"/>
</dbReference>
<dbReference type="PDB" id="5WNP">
    <property type="method" value="X-ray"/>
    <property type="resolution" value="3.30 A"/>
    <property type="chains" value="B=6-241"/>
</dbReference>
<dbReference type="PDB" id="5WNQ">
    <property type="method" value="X-ray"/>
    <property type="resolution" value="3.50 A"/>
    <property type="chains" value="B=7-240"/>
</dbReference>
<dbReference type="PDB" id="5WNR">
    <property type="method" value="X-ray"/>
    <property type="resolution" value="3.50 A"/>
    <property type="chains" value="B=7-240"/>
</dbReference>
<dbReference type="PDB" id="5WNS">
    <property type="method" value="X-ray"/>
    <property type="resolution" value="3.50 A"/>
    <property type="chains" value="B=7-240"/>
</dbReference>
<dbReference type="PDB" id="5WNT">
    <property type="method" value="X-ray"/>
    <property type="resolution" value="3.30 A"/>
    <property type="chains" value="B=6-241"/>
</dbReference>
<dbReference type="PDB" id="5WNU">
    <property type="method" value="X-ray"/>
    <property type="resolution" value="3.40 A"/>
    <property type="chains" value="B=6-241"/>
</dbReference>
<dbReference type="PDB" id="5WNV">
    <property type="method" value="X-ray"/>
    <property type="resolution" value="3.30 A"/>
    <property type="chains" value="B=6-241"/>
</dbReference>
<dbReference type="PDB" id="5ZLU">
    <property type="method" value="EM"/>
    <property type="resolution" value="3.60 A"/>
    <property type="chains" value="H=1-256"/>
</dbReference>
<dbReference type="PDB" id="6BUW">
    <property type="method" value="X-ray"/>
    <property type="resolution" value="3.50 A"/>
    <property type="chains" value="QB/XB=1-256"/>
</dbReference>
<dbReference type="PDB" id="6BZ6">
    <property type="method" value="X-ray"/>
    <property type="resolution" value="3.18 A"/>
    <property type="chains" value="QB/XB=1-256"/>
</dbReference>
<dbReference type="PDB" id="6BZ7">
    <property type="method" value="X-ray"/>
    <property type="resolution" value="3.68 A"/>
    <property type="chains" value="QB/XB=1-256"/>
</dbReference>
<dbReference type="PDB" id="6BZ8">
    <property type="method" value="X-ray"/>
    <property type="resolution" value="3.74 A"/>
    <property type="chains" value="QB/XB=1-256"/>
</dbReference>
<dbReference type="PDB" id="6C5L">
    <property type="method" value="X-ray"/>
    <property type="resolution" value="3.20 A"/>
    <property type="chains" value="AB/CB=1-256"/>
</dbReference>
<dbReference type="PDB" id="6CAE">
    <property type="method" value="X-ray"/>
    <property type="resolution" value="2.60 A"/>
    <property type="chains" value="1b/2b=1-256"/>
</dbReference>
<dbReference type="PDB" id="6CAO">
    <property type="method" value="X-ray"/>
    <property type="resolution" value="3.45 A"/>
    <property type="chains" value="B=6-241"/>
</dbReference>
<dbReference type="PDB" id="6CAP">
    <property type="method" value="X-ray"/>
    <property type="resolution" value="3.40 A"/>
    <property type="chains" value="B=7-240"/>
</dbReference>
<dbReference type="PDB" id="6CAQ">
    <property type="method" value="X-ray"/>
    <property type="resolution" value="3.40 A"/>
    <property type="chains" value="B=7-240"/>
</dbReference>
<dbReference type="PDB" id="6CAR">
    <property type="method" value="X-ray"/>
    <property type="resolution" value="3.40 A"/>
    <property type="chains" value="B=2-256"/>
</dbReference>
<dbReference type="PDB" id="6CAS">
    <property type="method" value="X-ray"/>
    <property type="resolution" value="3.50 A"/>
    <property type="chains" value="B=2-256"/>
</dbReference>
<dbReference type="PDB" id="6CFJ">
    <property type="method" value="X-ray"/>
    <property type="resolution" value="2.80 A"/>
    <property type="chains" value="1b/2b=1-256"/>
</dbReference>
<dbReference type="PDB" id="6CFK">
    <property type="method" value="X-ray"/>
    <property type="resolution" value="2.70 A"/>
    <property type="chains" value="1b/2b=1-256"/>
</dbReference>
<dbReference type="PDB" id="6CFL">
    <property type="method" value="X-ray"/>
    <property type="resolution" value="2.60 A"/>
    <property type="chains" value="1b/2b=1-256"/>
</dbReference>
<dbReference type="PDB" id="6CZR">
    <property type="method" value="X-ray"/>
    <property type="resolution" value="3.14 A"/>
    <property type="chains" value="1b/2b=7-237"/>
</dbReference>
<dbReference type="PDB" id="6DTI">
    <property type="method" value="X-ray"/>
    <property type="resolution" value="3.54 A"/>
    <property type="chains" value="B=1-256"/>
</dbReference>
<dbReference type="PDB" id="6FKR">
    <property type="method" value="X-ray"/>
    <property type="resolution" value="3.20 A"/>
    <property type="chains" value="1b/2b=7-237"/>
</dbReference>
<dbReference type="PDB" id="6GSJ">
    <property type="method" value="X-ray"/>
    <property type="resolution" value="2.96 A"/>
    <property type="chains" value="12/1E=1-256"/>
</dbReference>
<dbReference type="PDB" id="6GSK">
    <property type="method" value="X-ray"/>
    <property type="resolution" value="3.36 A"/>
    <property type="chains" value="12/1E=1-256"/>
</dbReference>
<dbReference type="PDB" id="6GSL">
    <property type="method" value="X-ray"/>
    <property type="resolution" value="3.16 A"/>
    <property type="chains" value="12/1E=1-256"/>
</dbReference>
<dbReference type="PDB" id="6GZQ">
    <property type="method" value="EM"/>
    <property type="resolution" value="3.28 A"/>
    <property type="chains" value="B2=4-240"/>
</dbReference>
<dbReference type="PDB" id="6GZX">
    <property type="method" value="EM"/>
    <property type="resolution" value="4.57 A"/>
    <property type="chains" value="B3/B4=4-240"/>
</dbReference>
<dbReference type="PDB" id="6GZZ">
    <property type="method" value="EM"/>
    <property type="resolution" value="4.13 A"/>
    <property type="chains" value="B3/B4=4-240"/>
</dbReference>
<dbReference type="PDB" id="6MKN">
    <property type="method" value="X-ray"/>
    <property type="resolution" value="3.46 A"/>
    <property type="chains" value="B=1-256"/>
</dbReference>
<dbReference type="PDB" id="6MPF">
    <property type="method" value="X-ray"/>
    <property type="resolution" value="3.33 A"/>
    <property type="chains" value="B=7-240"/>
</dbReference>
<dbReference type="PDB" id="6MPI">
    <property type="method" value="X-ray"/>
    <property type="resolution" value="3.33 A"/>
    <property type="chains" value="B=1-256"/>
</dbReference>
<dbReference type="PDB" id="6N9E">
    <property type="method" value="X-ray"/>
    <property type="resolution" value="3.70 A"/>
    <property type="chains" value="1b/2b=1-256"/>
</dbReference>
<dbReference type="PDB" id="6N9F">
    <property type="method" value="X-ray"/>
    <property type="resolution" value="3.70 A"/>
    <property type="chains" value="1b/2b=1-256"/>
</dbReference>
<dbReference type="PDB" id="6ND5">
    <property type="method" value="X-ray"/>
    <property type="resolution" value="2.60 A"/>
    <property type="chains" value="1b/2b=1-256"/>
</dbReference>
<dbReference type="PDB" id="6ND6">
    <property type="method" value="X-ray"/>
    <property type="resolution" value="2.85 A"/>
    <property type="chains" value="1b/2b=1-256"/>
</dbReference>
<dbReference type="PDB" id="6NDK">
    <property type="method" value="X-ray"/>
    <property type="resolution" value="3.64 A"/>
    <property type="chains" value="QB/XB=1-256"/>
</dbReference>
<dbReference type="PDB" id="6NSH">
    <property type="method" value="X-ray"/>
    <property type="resolution" value="3.40 A"/>
    <property type="chains" value="QB/XB=1-256"/>
</dbReference>
<dbReference type="PDB" id="6NTA">
    <property type="method" value="X-ray"/>
    <property type="resolution" value="3.10 A"/>
    <property type="chains" value="QB/XB=1-256"/>
</dbReference>
<dbReference type="PDB" id="6NUO">
    <property type="method" value="X-ray"/>
    <property type="resolution" value="3.20 A"/>
    <property type="chains" value="QB/XB=1-256"/>
</dbReference>
<dbReference type="PDB" id="6NWY">
    <property type="method" value="X-ray"/>
    <property type="resolution" value="3.50 A"/>
    <property type="chains" value="QB/XB=1-256"/>
</dbReference>
<dbReference type="PDB" id="6NY6">
    <property type="method" value="X-ray"/>
    <property type="resolution" value="3.74 A"/>
    <property type="chains" value="B=1-256"/>
</dbReference>
<dbReference type="PDB" id="6O3M">
    <property type="method" value="X-ray"/>
    <property type="resolution" value="3.97 A"/>
    <property type="chains" value="QB/XB=1-256"/>
</dbReference>
<dbReference type="PDB" id="6O97">
    <property type="method" value="X-ray"/>
    <property type="resolution" value="2.75 A"/>
    <property type="chains" value="1b/2b=1-256"/>
</dbReference>
<dbReference type="PDB" id="6OF1">
    <property type="method" value="X-ray"/>
    <property type="resolution" value="2.80 A"/>
    <property type="chains" value="1b/2b=1-256"/>
</dbReference>
<dbReference type="PDB" id="6OF6">
    <property type="method" value="X-ray"/>
    <property type="resolution" value="3.20 A"/>
    <property type="chains" value="QB/XB=1-256"/>
</dbReference>
<dbReference type="PDB" id="6OJ2">
    <property type="method" value="X-ray"/>
    <property type="resolution" value="3.20 A"/>
    <property type="chains" value="QB/XB=1-256"/>
</dbReference>
<dbReference type="PDB" id="6OPE">
    <property type="method" value="X-ray"/>
    <property type="resolution" value="3.10 A"/>
    <property type="chains" value="QB/XB=1-256"/>
</dbReference>
<dbReference type="PDB" id="6ORD">
    <property type="method" value="X-ray"/>
    <property type="resolution" value="3.10 A"/>
    <property type="chains" value="QB/XB=1-256"/>
</dbReference>
<dbReference type="PDB" id="6OSI">
    <property type="method" value="X-ray"/>
    <property type="resolution" value="4.14 A"/>
    <property type="chains" value="QB/XB=1-256"/>
</dbReference>
<dbReference type="PDB" id="6OTR">
    <property type="method" value="X-ray"/>
    <property type="resolution" value="3.12 A"/>
    <property type="chains" value="QB/XB=1-256"/>
</dbReference>
<dbReference type="PDB" id="6OXA">
    <property type="method" value="X-ray"/>
    <property type="resolution" value="3.25 A"/>
    <property type="chains" value="QB/XB=1-256"/>
</dbReference>
<dbReference type="PDB" id="6OXI">
    <property type="method" value="X-ray"/>
    <property type="resolution" value="3.50 A"/>
    <property type="chains" value="QB/XB=1-256"/>
</dbReference>
<dbReference type="PDB" id="6Q95">
    <property type="method" value="EM"/>
    <property type="resolution" value="3.70 A"/>
    <property type="chains" value="g=7-241"/>
</dbReference>
<dbReference type="PDB" id="6QNQ">
    <property type="method" value="X-ray"/>
    <property type="resolution" value="3.50 A"/>
    <property type="chains" value="12/1E=1-256"/>
</dbReference>
<dbReference type="PDB" id="6QNR">
    <property type="method" value="X-ray"/>
    <property type="resolution" value="3.10 A"/>
    <property type="chains" value="12/1E=1-256"/>
</dbReference>
<dbReference type="PDB" id="6UCQ">
    <property type="method" value="X-ray"/>
    <property type="resolution" value="3.50 A"/>
    <property type="chains" value="1b/2b=1-256"/>
</dbReference>
<dbReference type="PDB" id="6UO1">
    <property type="method" value="X-ray"/>
    <property type="resolution" value="2.95 A"/>
    <property type="chains" value="1b/2b=1-256"/>
</dbReference>
<dbReference type="PDB" id="6XHV">
    <property type="method" value="X-ray"/>
    <property type="resolution" value="2.40 A"/>
    <property type="chains" value="1b/2b=1-256"/>
</dbReference>
<dbReference type="PDB" id="6XHW">
    <property type="method" value="X-ray"/>
    <property type="resolution" value="2.50 A"/>
    <property type="chains" value="1b/2b=1-256"/>
</dbReference>
<dbReference type="PDB" id="6XHX">
    <property type="method" value="X-ray"/>
    <property type="resolution" value="2.55 A"/>
    <property type="chains" value="1b/2b=1-256"/>
</dbReference>
<dbReference type="PDB" id="6XHY">
    <property type="method" value="X-ray"/>
    <property type="resolution" value="2.60 A"/>
    <property type="chains" value="1b/2b=1-256"/>
</dbReference>
<dbReference type="PDB" id="6XQD">
    <property type="method" value="X-ray"/>
    <property type="resolution" value="2.80 A"/>
    <property type="chains" value="1b/2b=1-256"/>
</dbReference>
<dbReference type="PDB" id="6XQE">
    <property type="method" value="X-ray"/>
    <property type="resolution" value="3.00 A"/>
    <property type="chains" value="1b/2b=1-256"/>
</dbReference>
<dbReference type="PDB" id="7AZO">
    <property type="method" value="X-ray"/>
    <property type="resolution" value="3.30 A"/>
    <property type="chains" value="S2A/S2B=1-256"/>
</dbReference>
<dbReference type="PDB" id="7AZS">
    <property type="method" value="X-ray"/>
    <property type="resolution" value="3.10 A"/>
    <property type="chains" value="S2A/S2B=1-256"/>
</dbReference>
<dbReference type="PDB" id="7DUG">
    <property type="method" value="X-ray"/>
    <property type="resolution" value="3.75 A"/>
    <property type="chains" value="B=1-256"/>
</dbReference>
<dbReference type="PDB" id="7DUH">
    <property type="method" value="X-ray"/>
    <property type="resolution" value="3.75 A"/>
    <property type="chains" value="B=1-256"/>
</dbReference>
<dbReference type="PDB" id="7DUI">
    <property type="method" value="X-ray"/>
    <property type="resolution" value="3.62 A"/>
    <property type="chains" value="B=1-256"/>
</dbReference>
<dbReference type="PDB" id="7DUJ">
    <property type="method" value="X-ray"/>
    <property type="resolution" value="3.75 A"/>
    <property type="chains" value="B=1-256"/>
</dbReference>
<dbReference type="PDB" id="7DUK">
    <property type="method" value="X-ray"/>
    <property type="resolution" value="3.60 A"/>
    <property type="chains" value="B=1-256"/>
</dbReference>
<dbReference type="PDB" id="7DUL">
    <property type="method" value="X-ray"/>
    <property type="resolution" value="3.62 A"/>
    <property type="chains" value="B=1-256"/>
</dbReference>
<dbReference type="PDB" id="7JQL">
    <property type="method" value="X-ray"/>
    <property type="resolution" value="3.00 A"/>
    <property type="chains" value="1b/2b=1-256"/>
</dbReference>
<dbReference type="PDB" id="7JQM">
    <property type="method" value="X-ray"/>
    <property type="resolution" value="3.05 A"/>
    <property type="chains" value="1b/2b=1-256"/>
</dbReference>
<dbReference type="PDB" id="7LH5">
    <property type="method" value="X-ray"/>
    <property type="resolution" value="3.27 A"/>
    <property type="chains" value="AB/CB=1-256"/>
</dbReference>
<dbReference type="PDB" id="7MD7">
    <property type="method" value="X-ray"/>
    <property type="resolution" value="2.80 A"/>
    <property type="chains" value="1b/2b=1-256"/>
</dbReference>
<dbReference type="PDB" id="7RQ8">
    <property type="method" value="X-ray"/>
    <property type="resolution" value="2.50 A"/>
    <property type="chains" value="1b/2b=1-256"/>
</dbReference>
<dbReference type="PDB" id="7RQ9">
    <property type="method" value="X-ray"/>
    <property type="resolution" value="2.60 A"/>
    <property type="chains" value="1b/2b=1-256"/>
</dbReference>
<dbReference type="PDB" id="7RQA">
    <property type="method" value="X-ray"/>
    <property type="resolution" value="2.40 A"/>
    <property type="chains" value="1b/2b=1-256"/>
</dbReference>
<dbReference type="PDB" id="7RQB">
    <property type="method" value="X-ray"/>
    <property type="resolution" value="2.45 A"/>
    <property type="chains" value="1b/2b=1-256"/>
</dbReference>
<dbReference type="PDB" id="7RQC">
    <property type="method" value="X-ray"/>
    <property type="resolution" value="2.50 A"/>
    <property type="chains" value="1b/2b=1-256"/>
</dbReference>
<dbReference type="PDB" id="7RQD">
    <property type="method" value="X-ray"/>
    <property type="resolution" value="2.50 A"/>
    <property type="chains" value="1b/2b=1-256"/>
</dbReference>
<dbReference type="PDB" id="7RQE">
    <property type="method" value="X-ray"/>
    <property type="resolution" value="2.40 A"/>
    <property type="chains" value="1b/2b=1-256"/>
</dbReference>
<dbReference type="PDB" id="7U2H">
    <property type="method" value="X-ray"/>
    <property type="resolution" value="2.55 A"/>
    <property type="chains" value="1b/2b=1-256"/>
</dbReference>
<dbReference type="PDB" id="7U2I">
    <property type="method" value="X-ray"/>
    <property type="resolution" value="2.55 A"/>
    <property type="chains" value="1b/2b=1-256"/>
</dbReference>
<dbReference type="PDB" id="7U2J">
    <property type="method" value="X-ray"/>
    <property type="resolution" value="2.55 A"/>
    <property type="chains" value="1b/2b=1-256"/>
</dbReference>
<dbReference type="PDB" id="7V2L">
    <property type="method" value="EM"/>
    <property type="resolution" value="3.30 A"/>
    <property type="chains" value="B=1-256"/>
</dbReference>
<dbReference type="PDB" id="7V2M">
    <property type="method" value="EM"/>
    <property type="resolution" value="3.40 A"/>
    <property type="chains" value="B=1-256"/>
</dbReference>
<dbReference type="PDB" id="7V2N">
    <property type="method" value="EM"/>
    <property type="resolution" value="3.60 A"/>
    <property type="chains" value="B=1-256"/>
</dbReference>
<dbReference type="PDB" id="7V2O">
    <property type="method" value="EM"/>
    <property type="resolution" value="3.50 A"/>
    <property type="chains" value="B=1-256"/>
</dbReference>
<dbReference type="PDB" id="7V2P">
    <property type="method" value="EM"/>
    <property type="resolution" value="3.30 A"/>
    <property type="chains" value="B=1-256"/>
</dbReference>
<dbReference type="PDB" id="7V2Q">
    <property type="method" value="EM"/>
    <property type="resolution" value="3.24 A"/>
    <property type="chains" value="B=1-256"/>
</dbReference>
<dbReference type="PDB" id="8CVJ">
    <property type="method" value="X-ray"/>
    <property type="resolution" value="2.40 A"/>
    <property type="chains" value="1b/2b=1-256"/>
</dbReference>
<dbReference type="PDB" id="8CVK">
    <property type="method" value="X-ray"/>
    <property type="resolution" value="2.50 A"/>
    <property type="chains" value="1b/2b=1-256"/>
</dbReference>
<dbReference type="PDB" id="8CVL">
    <property type="method" value="X-ray"/>
    <property type="resolution" value="2.30 A"/>
    <property type="chains" value="1b/2b=1-256"/>
</dbReference>
<dbReference type="PDB" id="8EKB">
    <property type="method" value="X-ray"/>
    <property type="resolution" value="2.70 A"/>
    <property type="chains" value="1b/2b=1-256"/>
</dbReference>
<dbReference type="PDB" id="8EV6">
    <property type="method" value="X-ray"/>
    <property type="resolution" value="2.95 A"/>
    <property type="chains" value="1b/2b=1-256"/>
</dbReference>
<dbReference type="PDB" id="8EV7">
    <property type="method" value="X-ray"/>
    <property type="resolution" value="2.89 A"/>
    <property type="chains" value="1b/2b=1-256"/>
</dbReference>
<dbReference type="PDB" id="8FC1">
    <property type="method" value="X-ray"/>
    <property type="resolution" value="2.50 A"/>
    <property type="chains" value="1b/2b=1-256"/>
</dbReference>
<dbReference type="PDB" id="8FC2">
    <property type="method" value="X-ray"/>
    <property type="resolution" value="2.50 A"/>
    <property type="chains" value="1b/2b=1-256"/>
</dbReference>
<dbReference type="PDB" id="8FC3">
    <property type="method" value="X-ray"/>
    <property type="resolution" value="2.60 A"/>
    <property type="chains" value="1b/2b=1-256"/>
</dbReference>
<dbReference type="PDB" id="8FC4">
    <property type="method" value="X-ray"/>
    <property type="resolution" value="2.45 A"/>
    <property type="chains" value="1b/2b=1-256"/>
</dbReference>
<dbReference type="PDB" id="8FC5">
    <property type="method" value="X-ray"/>
    <property type="resolution" value="2.65 A"/>
    <property type="chains" value="1b/2b=1-256"/>
</dbReference>
<dbReference type="PDB" id="8FC6">
    <property type="method" value="X-ray"/>
    <property type="resolution" value="2.35 A"/>
    <property type="chains" value="1b/2b=1-256"/>
</dbReference>
<dbReference type="PDB" id="8FOM">
    <property type="method" value="X-ray"/>
    <property type="resolution" value="3.58 A"/>
    <property type="chains" value="QB/XB=1-256"/>
</dbReference>
<dbReference type="PDB" id="8FON">
    <property type="method" value="X-ray"/>
    <property type="resolution" value="3.64 A"/>
    <property type="chains" value="QB/XB=1-256"/>
</dbReference>
<dbReference type="PDB" id="8G29">
    <property type="method" value="X-ray"/>
    <property type="resolution" value="2.55 A"/>
    <property type="chains" value="1b/2b=1-256"/>
</dbReference>
<dbReference type="PDB" id="8G2A">
    <property type="method" value="X-ray"/>
    <property type="resolution" value="2.45 A"/>
    <property type="chains" value="1b/2b=1-256"/>
</dbReference>
<dbReference type="PDB" id="8G2B">
    <property type="method" value="X-ray"/>
    <property type="resolution" value="2.55 A"/>
    <property type="chains" value="1b/2b=1-256"/>
</dbReference>
<dbReference type="PDB" id="8G2C">
    <property type="method" value="X-ray"/>
    <property type="resolution" value="2.65 A"/>
    <property type="chains" value="1b/2b=1-256"/>
</dbReference>
<dbReference type="PDB" id="8G2D">
    <property type="method" value="X-ray"/>
    <property type="resolution" value="2.70 A"/>
    <property type="chains" value="1b/2b=1-256"/>
</dbReference>
<dbReference type="PDB" id="8T8B">
    <property type="method" value="X-ray"/>
    <property type="resolution" value="2.65 A"/>
    <property type="chains" value="1b/2b=1-256"/>
</dbReference>
<dbReference type="PDB" id="8T8C">
    <property type="method" value="X-ray"/>
    <property type="resolution" value="2.60 A"/>
    <property type="chains" value="1b/2b=1-256"/>
</dbReference>
<dbReference type="PDB" id="8UD6">
    <property type="method" value="X-ray"/>
    <property type="resolution" value="2.70 A"/>
    <property type="chains" value="1b/2b=1-256"/>
</dbReference>
<dbReference type="PDB" id="8UD7">
    <property type="method" value="X-ray"/>
    <property type="resolution" value="2.55 A"/>
    <property type="chains" value="1b/2b=1-256"/>
</dbReference>
<dbReference type="PDB" id="8UD8">
    <property type="method" value="X-ray"/>
    <property type="resolution" value="2.60 A"/>
    <property type="chains" value="1b/2b=1-256"/>
</dbReference>
<dbReference type="PDB" id="8UVR">
    <property type="method" value="X-ray"/>
    <property type="resolution" value="2.60 A"/>
    <property type="chains" value="1b/2b=1-256"/>
</dbReference>
<dbReference type="PDB" id="8UVS">
    <property type="method" value="X-ray"/>
    <property type="resolution" value="2.75 A"/>
    <property type="chains" value="1b/2b=1-256"/>
</dbReference>
<dbReference type="PDB" id="8VTU">
    <property type="method" value="X-ray"/>
    <property type="resolution" value="2.40 A"/>
    <property type="chains" value="1b/2b=1-256"/>
</dbReference>
<dbReference type="PDB" id="8VTV">
    <property type="method" value="X-ray"/>
    <property type="resolution" value="2.55 A"/>
    <property type="chains" value="1b/2b=1-256"/>
</dbReference>
<dbReference type="PDB" id="8VTW">
    <property type="method" value="X-ray"/>
    <property type="resolution" value="2.35 A"/>
    <property type="chains" value="1b/2b=1-256"/>
</dbReference>
<dbReference type="PDB" id="8VTX">
    <property type="method" value="X-ray"/>
    <property type="resolution" value="2.40 A"/>
    <property type="chains" value="1b/2b=1-256"/>
</dbReference>
<dbReference type="PDB" id="8VTY">
    <property type="method" value="X-ray"/>
    <property type="resolution" value="2.60 A"/>
    <property type="chains" value="1b/2b=1-256"/>
</dbReference>
<dbReference type="PDB" id="9B00">
    <property type="method" value="X-ray"/>
    <property type="resolution" value="2.80 A"/>
    <property type="chains" value="1b/2b=1-256"/>
</dbReference>
<dbReference type="PDB" id="9D0J">
    <property type="method" value="X-ray"/>
    <property type="resolution" value="2.50 A"/>
    <property type="chains" value="1b/2b=1-256"/>
</dbReference>
<dbReference type="PDB" id="9D7R">
    <property type="method" value="X-ray"/>
    <property type="resolution" value="2.70 A"/>
    <property type="chains" value="1b/2b=1-256"/>
</dbReference>
<dbReference type="PDB" id="9D7S">
    <property type="method" value="X-ray"/>
    <property type="resolution" value="2.85 A"/>
    <property type="chains" value="1b/2b=1-256"/>
</dbReference>
<dbReference type="PDB" id="9D7T">
    <property type="method" value="X-ray"/>
    <property type="resolution" value="2.70 A"/>
    <property type="chains" value="1b/2b=1-256"/>
</dbReference>
<dbReference type="PDB" id="9DFC">
    <property type="method" value="X-ray"/>
    <property type="resolution" value="2.50 A"/>
    <property type="chains" value="1b/2b=1-256"/>
</dbReference>
<dbReference type="PDB" id="9DFD">
    <property type="method" value="X-ray"/>
    <property type="resolution" value="2.60 A"/>
    <property type="chains" value="1b/2b=1-256"/>
</dbReference>
<dbReference type="PDB" id="9DFE">
    <property type="method" value="X-ray"/>
    <property type="resolution" value="2.60 A"/>
    <property type="chains" value="1b/2b=1-256"/>
</dbReference>
<dbReference type="PDBsum" id="1FJG"/>
<dbReference type="PDBsum" id="1HNW"/>
<dbReference type="PDBsum" id="1HNX"/>
<dbReference type="PDBsum" id="1HNZ"/>
<dbReference type="PDBsum" id="1HR0"/>
<dbReference type="PDBsum" id="1I94"/>
<dbReference type="PDBsum" id="1I95"/>
<dbReference type="PDBsum" id="1I96"/>
<dbReference type="PDBsum" id="1I97"/>
<dbReference type="PDBsum" id="1IBK"/>
<dbReference type="PDBsum" id="1IBL"/>
<dbReference type="PDBsum" id="1IBM"/>
<dbReference type="PDBsum" id="1J5E"/>
<dbReference type="PDBsum" id="1JGO"/>
<dbReference type="PDBsum" id="1JGP"/>
<dbReference type="PDBsum" id="1JGQ"/>
<dbReference type="PDBsum" id="1ML5"/>
<dbReference type="PDBsum" id="1N32"/>
<dbReference type="PDBsum" id="1N33"/>
<dbReference type="PDBsum" id="1N34"/>
<dbReference type="PDBsum" id="1N36"/>
<dbReference type="PDBsum" id="1VVJ"/>
<dbReference type="PDBsum" id="1VY4"/>
<dbReference type="PDBsum" id="1VY5"/>
<dbReference type="PDBsum" id="1VY6"/>
<dbReference type="PDBsum" id="1VY7"/>
<dbReference type="PDBsum" id="1X18"/>
<dbReference type="PDBsum" id="1XMO"/>
<dbReference type="PDBsum" id="1XMQ"/>
<dbReference type="PDBsum" id="1XNQ"/>
<dbReference type="PDBsum" id="1XNR"/>
<dbReference type="PDBsum" id="2E5L"/>
<dbReference type="PDBsum" id="2F4V"/>
<dbReference type="PDBsum" id="2HHH"/>
<dbReference type="PDBsum" id="2OM7"/>
<dbReference type="PDBsum" id="2UU9"/>
<dbReference type="PDBsum" id="2UUA"/>
<dbReference type="PDBsum" id="2UUB"/>
<dbReference type="PDBsum" id="2UUC"/>
<dbReference type="PDBsum" id="2UXB"/>
<dbReference type="PDBsum" id="2UXC"/>
<dbReference type="PDBsum" id="2UXD"/>
<dbReference type="PDBsum" id="2VQE"/>
<dbReference type="PDBsum" id="2VQF"/>
<dbReference type="PDBsum" id="2ZM6"/>
<dbReference type="PDBsum" id="3OTO"/>
<dbReference type="PDBsum" id="3T1H"/>
<dbReference type="PDBsum" id="3T1Y"/>
<dbReference type="PDBsum" id="4AQY"/>
<dbReference type="PDBsum" id="4B3M"/>
<dbReference type="PDBsum" id="4B3R"/>
<dbReference type="PDBsum" id="4B3S"/>
<dbReference type="PDBsum" id="4B3T"/>
<dbReference type="PDBsum" id="4DR1"/>
<dbReference type="PDBsum" id="4DR2"/>
<dbReference type="PDBsum" id="4DR3"/>
<dbReference type="PDBsum" id="4DR4"/>
<dbReference type="PDBsum" id="4DR5"/>
<dbReference type="PDBsum" id="4DR6"/>
<dbReference type="PDBsum" id="4DR7"/>
<dbReference type="PDBsum" id="4DUY"/>
<dbReference type="PDBsum" id="4DUZ"/>
<dbReference type="PDBsum" id="4DV0"/>
<dbReference type="PDBsum" id="4DV1"/>
<dbReference type="PDBsum" id="4DV2"/>
<dbReference type="PDBsum" id="4DV3"/>
<dbReference type="PDBsum" id="4DV4"/>
<dbReference type="PDBsum" id="4DV5"/>
<dbReference type="PDBsum" id="4DV6"/>
<dbReference type="PDBsum" id="4DV7"/>
<dbReference type="PDBsum" id="4GKJ"/>
<dbReference type="PDBsum" id="4GKK"/>
<dbReference type="PDBsum" id="4JI0"/>
<dbReference type="PDBsum" id="4JI1"/>
<dbReference type="PDBsum" id="4JI2"/>
<dbReference type="PDBsum" id="4JI3"/>
<dbReference type="PDBsum" id="4JI4"/>
<dbReference type="PDBsum" id="4JI5"/>
<dbReference type="PDBsum" id="4JI6"/>
<dbReference type="PDBsum" id="4JI7"/>
<dbReference type="PDBsum" id="4JI8"/>
<dbReference type="PDBsum" id="4JV5"/>
<dbReference type="PDBsum" id="4JYA"/>
<dbReference type="PDBsum" id="4K0K"/>
<dbReference type="PDBsum" id="4KHP"/>
<dbReference type="PDBsum" id="4L47"/>
<dbReference type="PDBsum" id="4L71"/>
<dbReference type="PDBsum" id="4LEL"/>
<dbReference type="PDBsum" id="4LF4"/>
<dbReference type="PDBsum" id="4LF5"/>
<dbReference type="PDBsum" id="4LF6"/>
<dbReference type="PDBsum" id="4LF7"/>
<dbReference type="PDBsum" id="4LF8"/>
<dbReference type="PDBsum" id="4LF9"/>
<dbReference type="PDBsum" id="4LFA"/>
<dbReference type="PDBsum" id="4LFB"/>
<dbReference type="PDBsum" id="4LFC"/>
<dbReference type="PDBsum" id="4LFZ"/>
<dbReference type="PDBsum" id="4LNT"/>
<dbReference type="PDBsum" id="4LSK"/>
<dbReference type="PDBsum" id="4LT8"/>
<dbReference type="PDBsum" id="4NXM"/>
<dbReference type="PDBsum" id="4NXN"/>
<dbReference type="PDBsum" id="4OX9"/>
<dbReference type="PDBsum" id="4P6F"/>
<dbReference type="PDBsum" id="4P70"/>
<dbReference type="PDBsum" id="4TUA"/>
<dbReference type="PDBsum" id="4TUB"/>
<dbReference type="PDBsum" id="4TUC"/>
<dbReference type="PDBsum" id="4TUD"/>
<dbReference type="PDBsum" id="4TUE"/>
<dbReference type="PDBsum" id="4V42"/>
<dbReference type="PDBsum" id="4V49"/>
<dbReference type="PDBsum" id="4V4A"/>
<dbReference type="PDBsum" id="4V4P"/>
<dbReference type="PDBsum" id="4V4R"/>
<dbReference type="PDBsum" id="4V4S"/>
<dbReference type="PDBsum" id="4V4T"/>
<dbReference type="PDBsum" id="4V4X"/>
<dbReference type="PDBsum" id="4V4Y"/>
<dbReference type="PDBsum" id="4V4Z"/>
<dbReference type="PDBsum" id="4V51"/>
<dbReference type="PDBsum" id="4V5A"/>
<dbReference type="PDBsum" id="4V5C"/>
<dbReference type="PDBsum" id="4V5D"/>
<dbReference type="PDBsum" id="4V5E"/>
<dbReference type="PDBsum" id="4V5F"/>
<dbReference type="PDBsum" id="4V5G"/>
<dbReference type="PDBsum" id="4V5J"/>
<dbReference type="PDBsum" id="4V5K"/>
<dbReference type="PDBsum" id="4V5L"/>
<dbReference type="PDBsum" id="4V5M"/>
<dbReference type="PDBsum" id="4V5N"/>
<dbReference type="PDBsum" id="4V5P"/>
<dbReference type="PDBsum" id="4V5Q"/>
<dbReference type="PDBsum" id="4V5R"/>
<dbReference type="PDBsum" id="4V5S"/>
<dbReference type="PDBsum" id="4V68"/>
<dbReference type="PDBsum" id="4V6A"/>
<dbReference type="PDBsum" id="4V6F"/>
<dbReference type="PDBsum" id="4V6G"/>
<dbReference type="PDBsum" id="4V7J"/>
<dbReference type="PDBsum" id="4V7K"/>
<dbReference type="PDBsum" id="4V7L"/>
<dbReference type="PDBsum" id="4V7M"/>
<dbReference type="PDBsum" id="4V7W"/>
<dbReference type="PDBsum" id="4V7X"/>
<dbReference type="PDBsum" id="4V7Y"/>
<dbReference type="PDBsum" id="4V7Z"/>
<dbReference type="PDBsum" id="4V87"/>
<dbReference type="PDBsum" id="4V8A"/>
<dbReference type="PDBsum" id="4V8B"/>
<dbReference type="PDBsum" id="4V8C"/>
<dbReference type="PDBsum" id="4V8D"/>
<dbReference type="PDBsum" id="4V8E"/>
<dbReference type="PDBsum" id="4V8F"/>
<dbReference type="PDBsum" id="4V8G"/>
<dbReference type="PDBsum" id="4V8H"/>
<dbReference type="PDBsum" id="4V8I"/>
<dbReference type="PDBsum" id="4V8J"/>
<dbReference type="PDBsum" id="4V8N"/>
<dbReference type="PDBsum" id="4V8O"/>
<dbReference type="PDBsum" id="4V8Q"/>
<dbReference type="PDBsum" id="4V8U"/>
<dbReference type="PDBsum" id="4V8X"/>
<dbReference type="PDBsum" id="4V90"/>
<dbReference type="PDBsum" id="4V95"/>
<dbReference type="PDBsum" id="4V97"/>
<dbReference type="PDBsum" id="4V9A"/>
<dbReference type="PDBsum" id="4V9B"/>
<dbReference type="PDBsum" id="4V9H"/>
<dbReference type="PDBsum" id="4V9I"/>
<dbReference type="PDBsum" id="4V9R"/>
<dbReference type="PDBsum" id="4V9S"/>
<dbReference type="PDBsum" id="4W2E"/>
<dbReference type="PDBsum" id="4W2F"/>
<dbReference type="PDBsum" id="4W2G"/>
<dbReference type="PDBsum" id="4W2H"/>
<dbReference type="PDBsum" id="4W2I"/>
<dbReference type="PDBsum" id="4W4G"/>
<dbReference type="PDBsum" id="4WPO"/>
<dbReference type="PDBsum" id="4WQ1"/>
<dbReference type="PDBsum" id="4WQF"/>
<dbReference type="PDBsum" id="4WQR"/>
<dbReference type="PDBsum" id="4WQU"/>
<dbReference type="PDBsum" id="4WQY"/>
<dbReference type="PDBsum" id="4WR6"/>
<dbReference type="PDBsum" id="4WRA"/>
<dbReference type="PDBsum" id="4WRO"/>
<dbReference type="PDBsum" id="4WSD"/>
<dbReference type="PDBsum" id="4WSM"/>
<dbReference type="PDBsum" id="4WT1"/>
<dbReference type="PDBsum" id="4WT8"/>
<dbReference type="PDBsum" id="4WU1"/>
<dbReference type="PDBsum" id="4WZD"/>
<dbReference type="PDBsum" id="4WZO"/>
<dbReference type="PDBsum" id="4X62"/>
<dbReference type="PDBsum" id="4X64"/>
<dbReference type="PDBsum" id="4X65"/>
<dbReference type="PDBsum" id="4X66"/>
<dbReference type="PDBsum" id="4Y4O"/>
<dbReference type="PDBsum" id="4Y4P"/>
<dbReference type="PDBsum" id="4YHH"/>
<dbReference type="PDBsum" id="4YPB"/>
<dbReference type="PDBsum" id="4YY3"/>
<dbReference type="PDBsum" id="4YZV"/>
<dbReference type="PDBsum" id="4Z3S"/>
<dbReference type="PDBsum" id="4Z8C"/>
<dbReference type="PDBsum" id="4ZER"/>
<dbReference type="PDBsum" id="4ZSN"/>
<dbReference type="PDBsum" id="5A9Z"/>
<dbReference type="PDBsum" id="5AA0"/>
<dbReference type="PDBsum" id="5BR8"/>
<dbReference type="PDBsum" id="5CZP"/>
<dbReference type="PDBsum" id="5D8B"/>
<dbReference type="PDBsum" id="5DFE"/>
<dbReference type="PDBsum" id="5DOX"/>
<dbReference type="PDBsum" id="5DOY"/>
<dbReference type="PDBsum" id="5E7K"/>
<dbReference type="PDBsum" id="5E81"/>
<dbReference type="PDBsum" id="5EL4"/>
<dbReference type="PDBsum" id="5EL5"/>
<dbReference type="PDBsum" id="5EL6"/>
<dbReference type="PDBsum" id="5EL7"/>
<dbReference type="PDBsum" id="5F8K"/>
<dbReference type="PDBsum" id="5FDU"/>
<dbReference type="PDBsum" id="5FDV"/>
<dbReference type="PDBsum" id="5HAU"/>
<dbReference type="PDBsum" id="5HCP"/>
<dbReference type="PDBsum" id="5HCQ"/>
<dbReference type="PDBsum" id="5HCR"/>
<dbReference type="PDBsum" id="5HD1"/>
<dbReference type="PDBsum" id="5IB7"/>
<dbReference type="PDBsum" id="5IB8"/>
<dbReference type="PDBsum" id="5IBB"/>
<dbReference type="PDBsum" id="5IMQ"/>
<dbReference type="PDBsum" id="5IMR"/>
<dbReference type="PDBsum" id="5IWA"/>
<dbReference type="PDBsum" id="5J30"/>
<dbReference type="PDBsum" id="5J3C"/>
<dbReference type="PDBsum" id="5J4B"/>
<dbReference type="PDBsum" id="5J4C"/>
<dbReference type="PDBsum" id="5J8B"/>
<dbReference type="PDBsum" id="5LMN"/>
<dbReference type="PDBsum" id="5LMO"/>
<dbReference type="PDBsum" id="5LMP"/>
<dbReference type="PDBsum" id="5LMQ"/>
<dbReference type="PDBsum" id="5LMR"/>
<dbReference type="PDBsum" id="5LMS"/>
<dbReference type="PDBsum" id="5LMT"/>
<dbReference type="PDBsum" id="5LMU"/>
<dbReference type="PDBsum" id="5LMV"/>
<dbReference type="PDBsum" id="5NDJ"/>
<dbReference type="PDBsum" id="5NDK"/>
<dbReference type="PDBsum" id="5OT7"/>
<dbReference type="PDBsum" id="5UQ7"/>
<dbReference type="PDBsum" id="5UQ8"/>
<dbReference type="PDBsum" id="5VP2"/>
<dbReference type="PDBsum" id="5VPO"/>
<dbReference type="PDBsum" id="5VPP"/>
<dbReference type="PDBsum" id="5W4K"/>
<dbReference type="PDBsum" id="5WIS"/>
<dbReference type="PDBsum" id="5WIT"/>
<dbReference type="PDBsum" id="5WNP"/>
<dbReference type="PDBsum" id="5WNQ"/>
<dbReference type="PDBsum" id="5WNR"/>
<dbReference type="PDBsum" id="5WNS"/>
<dbReference type="PDBsum" id="5WNT"/>
<dbReference type="PDBsum" id="5WNU"/>
<dbReference type="PDBsum" id="5WNV"/>
<dbReference type="PDBsum" id="5ZLU"/>
<dbReference type="PDBsum" id="6BUW"/>
<dbReference type="PDBsum" id="6BZ6"/>
<dbReference type="PDBsum" id="6BZ7"/>
<dbReference type="PDBsum" id="6BZ8"/>
<dbReference type="PDBsum" id="6C5L"/>
<dbReference type="PDBsum" id="6CAE"/>
<dbReference type="PDBsum" id="6CAO"/>
<dbReference type="PDBsum" id="6CAP"/>
<dbReference type="PDBsum" id="6CAQ"/>
<dbReference type="PDBsum" id="6CAR"/>
<dbReference type="PDBsum" id="6CAS"/>
<dbReference type="PDBsum" id="6CFJ"/>
<dbReference type="PDBsum" id="6CFK"/>
<dbReference type="PDBsum" id="6CFL"/>
<dbReference type="PDBsum" id="6CZR"/>
<dbReference type="PDBsum" id="6DTI"/>
<dbReference type="PDBsum" id="6FKR"/>
<dbReference type="PDBsum" id="6GSJ"/>
<dbReference type="PDBsum" id="6GSK"/>
<dbReference type="PDBsum" id="6GSL"/>
<dbReference type="PDBsum" id="6GZQ"/>
<dbReference type="PDBsum" id="6GZX"/>
<dbReference type="PDBsum" id="6GZZ"/>
<dbReference type="PDBsum" id="6MKN"/>
<dbReference type="PDBsum" id="6MPF"/>
<dbReference type="PDBsum" id="6MPI"/>
<dbReference type="PDBsum" id="6N9E"/>
<dbReference type="PDBsum" id="6N9F"/>
<dbReference type="PDBsum" id="6ND5"/>
<dbReference type="PDBsum" id="6ND6"/>
<dbReference type="PDBsum" id="6NDK"/>
<dbReference type="PDBsum" id="6NSH"/>
<dbReference type="PDBsum" id="6NTA"/>
<dbReference type="PDBsum" id="6NUO"/>
<dbReference type="PDBsum" id="6NWY"/>
<dbReference type="PDBsum" id="6NY6"/>
<dbReference type="PDBsum" id="6O3M"/>
<dbReference type="PDBsum" id="6O97"/>
<dbReference type="PDBsum" id="6OF1"/>
<dbReference type="PDBsum" id="6OF6"/>
<dbReference type="PDBsum" id="6OJ2"/>
<dbReference type="PDBsum" id="6OPE"/>
<dbReference type="PDBsum" id="6ORD"/>
<dbReference type="PDBsum" id="6OSI"/>
<dbReference type="PDBsum" id="6OTR"/>
<dbReference type="PDBsum" id="6OXA"/>
<dbReference type="PDBsum" id="6OXI"/>
<dbReference type="PDBsum" id="6Q95"/>
<dbReference type="PDBsum" id="6QNQ"/>
<dbReference type="PDBsum" id="6QNR"/>
<dbReference type="PDBsum" id="6UCQ"/>
<dbReference type="PDBsum" id="6UO1"/>
<dbReference type="PDBsum" id="6XHV"/>
<dbReference type="PDBsum" id="6XHW"/>
<dbReference type="PDBsum" id="6XHX"/>
<dbReference type="PDBsum" id="6XHY"/>
<dbReference type="PDBsum" id="6XQD"/>
<dbReference type="PDBsum" id="6XQE"/>
<dbReference type="PDBsum" id="7AZO"/>
<dbReference type="PDBsum" id="7AZS"/>
<dbReference type="PDBsum" id="7DUG"/>
<dbReference type="PDBsum" id="7DUH"/>
<dbReference type="PDBsum" id="7DUI"/>
<dbReference type="PDBsum" id="7DUJ"/>
<dbReference type="PDBsum" id="7DUK"/>
<dbReference type="PDBsum" id="7DUL"/>
<dbReference type="PDBsum" id="7JQL"/>
<dbReference type="PDBsum" id="7JQM"/>
<dbReference type="PDBsum" id="7LH5"/>
<dbReference type="PDBsum" id="7MD7"/>
<dbReference type="PDBsum" id="7RQ8"/>
<dbReference type="PDBsum" id="7RQ9"/>
<dbReference type="PDBsum" id="7RQA"/>
<dbReference type="PDBsum" id="7RQB"/>
<dbReference type="PDBsum" id="7RQC"/>
<dbReference type="PDBsum" id="7RQD"/>
<dbReference type="PDBsum" id="7RQE"/>
<dbReference type="PDBsum" id="7U2H"/>
<dbReference type="PDBsum" id="7U2I"/>
<dbReference type="PDBsum" id="7U2J"/>
<dbReference type="PDBsum" id="7V2L"/>
<dbReference type="PDBsum" id="7V2M"/>
<dbReference type="PDBsum" id="7V2N"/>
<dbReference type="PDBsum" id="7V2O"/>
<dbReference type="PDBsum" id="7V2P"/>
<dbReference type="PDBsum" id="7V2Q"/>
<dbReference type="PDBsum" id="8CVJ"/>
<dbReference type="PDBsum" id="8CVK"/>
<dbReference type="PDBsum" id="8CVL"/>
<dbReference type="PDBsum" id="8EKB"/>
<dbReference type="PDBsum" id="8EV6"/>
<dbReference type="PDBsum" id="8EV7"/>
<dbReference type="PDBsum" id="8FC1"/>
<dbReference type="PDBsum" id="8FC2"/>
<dbReference type="PDBsum" id="8FC3"/>
<dbReference type="PDBsum" id="8FC4"/>
<dbReference type="PDBsum" id="8FC5"/>
<dbReference type="PDBsum" id="8FC6"/>
<dbReference type="PDBsum" id="8FOM"/>
<dbReference type="PDBsum" id="8FON"/>
<dbReference type="PDBsum" id="8G29"/>
<dbReference type="PDBsum" id="8G2A"/>
<dbReference type="PDBsum" id="8G2B"/>
<dbReference type="PDBsum" id="8G2C"/>
<dbReference type="PDBsum" id="8G2D"/>
<dbReference type="PDBsum" id="8T8B"/>
<dbReference type="PDBsum" id="8T8C"/>
<dbReference type="PDBsum" id="8UD6"/>
<dbReference type="PDBsum" id="8UD7"/>
<dbReference type="PDBsum" id="8UD8"/>
<dbReference type="PDBsum" id="8UVR"/>
<dbReference type="PDBsum" id="8UVS"/>
<dbReference type="PDBsum" id="8VTU"/>
<dbReference type="PDBsum" id="8VTV"/>
<dbReference type="PDBsum" id="8VTW"/>
<dbReference type="PDBsum" id="8VTX"/>
<dbReference type="PDBsum" id="8VTY"/>
<dbReference type="PDBsum" id="9B00"/>
<dbReference type="PDBsum" id="9D0J"/>
<dbReference type="PDBsum" id="9D7R"/>
<dbReference type="PDBsum" id="9D7S"/>
<dbReference type="PDBsum" id="9D7T"/>
<dbReference type="PDBsum" id="9DFC"/>
<dbReference type="PDBsum" id="9DFD"/>
<dbReference type="PDBsum" id="9DFE"/>
<dbReference type="EMDB" id="EMD-0101"/>
<dbReference type="EMDB" id="EMD-0104"/>
<dbReference type="EMDB" id="EMD-0105"/>
<dbReference type="EMDB" id="EMD-31655"/>
<dbReference type="EMDB" id="EMD-31656"/>
<dbReference type="EMDB" id="EMD-31657"/>
<dbReference type="EMDB" id="EMD-31658"/>
<dbReference type="EMDB" id="EMD-31659"/>
<dbReference type="EMDB" id="EMD-31660"/>
<dbReference type="EMDB" id="EMD-3852"/>
<dbReference type="EMDB" id="EMD-4073"/>
<dbReference type="EMDB" id="EMD-4074"/>
<dbReference type="EMDB" id="EMD-4075"/>
<dbReference type="EMDB" id="EMD-4076"/>
<dbReference type="EMDB" id="EMD-4077"/>
<dbReference type="EMDB" id="EMD-4078"/>
<dbReference type="EMDB" id="EMD-4079"/>
<dbReference type="EMDB" id="EMD-4080"/>
<dbReference type="EMDB" id="EMD-4083"/>
<dbReference type="EMDB" id="EMD-4475"/>
<dbReference type="EMDB" id="EMD-6934"/>
<dbReference type="EMDB" id="EMD-8596"/>
<dbReference type="EMDB" id="EMD-8597"/>
<dbReference type="SMR" id="P80371"/>
<dbReference type="IntAct" id="P80371">
    <property type="interactions" value="10"/>
</dbReference>
<dbReference type="DrugBank" id="DB08185">
    <property type="generic name" value="2-METHYLTHIO-N6-ISOPENTENYL-ADENOSINE-5'-MONOPHOSPHATE"/>
</dbReference>
<dbReference type="EnsemblBacteria" id="BAD70684">
    <property type="protein sequence ID" value="BAD70684"/>
    <property type="gene ID" value="BAD70684"/>
</dbReference>
<dbReference type="GeneID" id="3170121"/>
<dbReference type="KEGG" id="ttj:TTHA0861"/>
<dbReference type="PATRIC" id="fig|300852.9.peg.855"/>
<dbReference type="eggNOG" id="COG0052">
    <property type="taxonomic scope" value="Bacteria"/>
</dbReference>
<dbReference type="HOGENOM" id="CLU_040318_1_2_0"/>
<dbReference type="PhylomeDB" id="P80371"/>
<dbReference type="EvolutionaryTrace" id="P80371"/>
<dbReference type="Proteomes" id="UP000000532">
    <property type="component" value="Chromosome"/>
</dbReference>
<dbReference type="GO" id="GO:0022627">
    <property type="term" value="C:cytosolic small ribosomal subunit"/>
    <property type="evidence" value="ECO:0007669"/>
    <property type="project" value="TreeGrafter"/>
</dbReference>
<dbReference type="GO" id="GO:0019843">
    <property type="term" value="F:rRNA binding"/>
    <property type="evidence" value="ECO:0007669"/>
    <property type="project" value="UniProtKB-KW"/>
</dbReference>
<dbReference type="GO" id="GO:0003735">
    <property type="term" value="F:structural constituent of ribosome"/>
    <property type="evidence" value="ECO:0007669"/>
    <property type="project" value="InterPro"/>
</dbReference>
<dbReference type="GO" id="GO:0006412">
    <property type="term" value="P:translation"/>
    <property type="evidence" value="ECO:0007669"/>
    <property type="project" value="UniProtKB-UniRule"/>
</dbReference>
<dbReference type="CDD" id="cd01425">
    <property type="entry name" value="RPS2"/>
    <property type="match status" value="1"/>
</dbReference>
<dbReference type="FunFam" id="1.10.287.610:FF:000001">
    <property type="entry name" value="30S ribosomal protein S2"/>
    <property type="match status" value="1"/>
</dbReference>
<dbReference type="Gene3D" id="3.40.50.10490">
    <property type="entry name" value="Glucose-6-phosphate isomerase like protein, domain 1"/>
    <property type="match status" value="1"/>
</dbReference>
<dbReference type="Gene3D" id="1.10.287.610">
    <property type="entry name" value="Helix hairpin bin"/>
    <property type="match status" value="1"/>
</dbReference>
<dbReference type="HAMAP" id="MF_00291_B">
    <property type="entry name" value="Ribosomal_uS2_B"/>
    <property type="match status" value="1"/>
</dbReference>
<dbReference type="InterPro" id="IPR001865">
    <property type="entry name" value="Ribosomal_uS2"/>
</dbReference>
<dbReference type="InterPro" id="IPR005706">
    <property type="entry name" value="Ribosomal_uS2_bac/mit/plastid"/>
</dbReference>
<dbReference type="InterPro" id="IPR018130">
    <property type="entry name" value="Ribosomal_uS2_CS"/>
</dbReference>
<dbReference type="InterPro" id="IPR023591">
    <property type="entry name" value="Ribosomal_uS2_flav_dom_sf"/>
</dbReference>
<dbReference type="NCBIfam" id="TIGR01011">
    <property type="entry name" value="rpsB_bact"/>
    <property type="match status" value="1"/>
</dbReference>
<dbReference type="PANTHER" id="PTHR12534">
    <property type="entry name" value="30S RIBOSOMAL PROTEIN S2 PROKARYOTIC AND ORGANELLAR"/>
    <property type="match status" value="1"/>
</dbReference>
<dbReference type="PANTHER" id="PTHR12534:SF0">
    <property type="entry name" value="SMALL RIBOSOMAL SUBUNIT PROTEIN US2M"/>
    <property type="match status" value="1"/>
</dbReference>
<dbReference type="Pfam" id="PF00318">
    <property type="entry name" value="Ribosomal_S2"/>
    <property type="match status" value="1"/>
</dbReference>
<dbReference type="PRINTS" id="PR00395">
    <property type="entry name" value="RIBOSOMALS2"/>
</dbReference>
<dbReference type="SUPFAM" id="SSF52313">
    <property type="entry name" value="Ribosomal protein S2"/>
    <property type="match status" value="1"/>
</dbReference>
<dbReference type="PROSITE" id="PS00962">
    <property type="entry name" value="RIBOSOMAL_S2_1"/>
    <property type="match status" value="1"/>
</dbReference>